<sequence>MAFVATQGATVVDQTTLMKKYLQFVAALTDVNTPDETKLKMMQEVSENFENVTSSPQYSTFLEHIIPRFLTFLQDGEVQFLQEKPAQQLRKLVLEIIHRIPTNEHLRPHTKNVLSVMFRFLETENEENVLICLRIIIELHKQFRPPITQEIHHFLDFVKQIYKELPKVVNRYFENPQVIPENTVPPPEMVGMITTIAVKVNPEREDSETRTHSIIPRGSLSLKVLAELPIIVVLMYQLYKLNIHNVVAEFVPLIMNTIAIQVSAQARQHKLYNKELYADFIAAQIKTLSFLAYIIRIYQELVTKYSQQMVKGMLQLLSNCPAETAHLRKELLIAAKHILTTELRNQFIPCMDKLFDESILIGSGYTARETLRPLAYSTLADLVHHVRQHLPLSDLSLAVQLFAKNIDDESLPSSIQTMSCKLLLNLVDCIRSKSEQESGNGRDVLMRMLEVFVLKFHTIARYQLSAIFKKCKPQSELGAVEAALPGVPTAPAAPGPAPSPAPVPAPPPPPPPPPPATPVTPAPVPPFEKQGEKDKEDKQTFQVTDCRSLVKTLVCGVKTITWGITSCKAPGEAQFIPNKQLQPKETQIYIKLVKYAMQALDIYQVQIAGNGQTYIRVANCQTVRMKEEKEVLEHFAGVFTMMNPLTFKEIFQTTVPYMVERISKNYALQIVANSFLANPTTSALFATILVEYLLDRLPEMGSNVELSNLYLKLFKLVFGSVSLFAAENEQMLKPHLHKIVNSSMELAQTAKEPYNYFLLLRALFRSIGGGSHDLLYQEFLPLLPNLLQGLNMLQSGLHKQHMKDLFVELCLTVPVRLSSLLPYLPMLMDPLVSALNGSQTLVSQGLRTLELCVDNLQPDFLYDHIQPVRAELMQALWRTLRNPADSISHVAYRVLGKFGGSNRKMLKESQKLHYVVTEVQGPSITVEFSDCKASLQLPMEKAIETALDCLKSANTEPYYRRQAWEVIKCFLVAMMSLEDNKHALYQLLAHPNFTEKTIPNVIISHRYKAQDTPARKTFEQALTGAFMSAVIKDLRPSALPFVASLIRHYTMVAVAQQCGPFLLPCYQVGSQPSTAMFHSEENGSKGMDPLVLIDAIAICMAYEEKELCKIGEVALAVIFDVASIILGSKERACQLPLFSYIVERLCACCYEQAWYAKLGGVVSIKFLMERLPLTWVLQNQQTFLKALLFVMMDLTGEVSNGAVAMAKTTLEQLLMRCATPLKDEERAEEIVAAQEKSFHHVTHDLVREVTSPNSTVRKQAMHSLQVLAQVTGKSVTVIMEPHKEVLQDMVPPKKHLLRHQPANAQIGLMEGNTFCTTLQPRLFTMDLNVVEHKVFYTELLNLCEAEDSALTKLPCYKSLPSLVPLRIAALNALAACNYLPQSREKIIAALFKALNSTNSELQEAGEACMRKFLEGATIEVDQIHTHMRPLLMMLGDYRSLTLNVVNRLTSVTRLFPNSFNDKFCDQMMQHLRKWMEVVVITHKGGQRSDGNESISECGRCPLSPFCQFEEMKICSAIINLFHLIPAAPQTLVKPLLEVVMKTERAMLIEAGSPFREPLIKFLTRHPSQTVELFMMEATLNDPQWSRMFMSFLKHKDARPLRDVLAANPNRFITLLLPGGAQTAVRPGSPSTSTMRLDLQFQAIKIISIIVKNDDSWLASQHSLVSQLRRVWVSENFQERHRKENMAATNWKEPKLLAYCLLNYCKRNYGDIELLFQLLRAFTGRFLCNMTFLKEYMEEEIPKNYSIAQKRALFFRFVDFNDPNFGDELKAKVLQHILNPAFLYSFEKGEGEQLLGPPNPEGDNPESITSVFITKVLDPEKQADMLDSLRIYLLQYATLLVEHAPHHIHDNNKNRNSKLRRLMTFAWPCLLSKACVDPACKYSGHLLLAHIIAKFAIHKKIVLQVFHSLLKAHAMEARAIVRQAMAILTPAVPARMEDGHQMLTHWTRKIIVEEGHTVPQLVHILHLIVQHFKVYYPVRHHLVQHMVSAMQRLGFTPSVTIEQRRLAVDLSEVVIKWELQRIKDQQPDSDMDPNSSGEGVNSVSSSIKRGLSVDSAQEVKRFRTATGAISAVFGRSQSLPGADSLLAKPIDKQHTDTVVNFLIRVACQVNDNTNTAGSPGEVLSRRCVNLLKTALRPDMWPKSELKLQWFDKLLMTVEQPNQVNYGNICTGLEVLSFLLTVLQSPAILSSFKPLQRGIAACMTCGNTKVLRAVHSLLSRLMSIFPTEPSTSSVASKYEELECLYAAVGKVIYEGLTNYEKATNANPSQLFGTLMILKSACSNNPSYIDRLISVFMRSLQKMVREHLNPQAASGSTEATSGTSELVMLSLELVKTRLAVMSMEMRKNFIQAILTSLIEKSPDAKILRAVVKIVEEWVKNNSPMAANQTPTLREKSILLVKMMTYIEKRFPEDLELNAQFLDLVNYVYRDETLSGSELTAKLEPAFLSGLRCAQPLIRAKFFEVFDNSMKRRVYERLLYVTCSQNWEAMGNHFWIKQCIELLLAVCEKSTPIGTSCQGAMLPSITNVINLADSHDRAAFAMVTHVKQEPRERENSESKEEDVEIDIELAPGDQTSTPKTKELSEKDIGNQLHMLTNRHDKFLDTLREVKTGALLSAFVQLCHISTTLAEKTWVQLFPRLWKILSDRQQHALAGEISPFLCSGSHQVQRDCQPSALNCFVEAMSQCVPPIPIRPCVLKYLGKTHNLWFRSTLMLEHQAFEKGLSLQIKPKQTTEFYEQESITPPQQEILDSLAELYSLLQEEDMWAGLWQKRCKYSETATAIAYEQHGFFEQAQESYEKAMDKAKKEHERSNASPAIFPEYQLWEDHWIRCSKELNQWEALTEYGQSKGHINPYLVLECAWRVSNWTAMKEALVQVEVSCPKEMAWKVNMYRGYLAICHPEEQQLSFIERLVEMASSLAIREWRRLPHVVSHVHTPLLQAAQQIIELQEAAQINAGLQPTNLGRNNSLHDMKTVVKTWRNRLPIVSDDLSHWSSIFMWRQHHYQGKPTWSGMHSSSIVTAYENSSQHDPSSNNAMLGVHASASAIIQYGKIARKQGLVNVALDILSRIHTIPTVPIVDCFQKIRQQVKCYLQLAGVMGKNECMQGLEVIESTNLKYFTKEMTAEFYALKGMFLAQINKSEEANKAFSAAVQMHDVLVKAWAMWGDYLENIFVKERQLHLGVSAITCYLHACRHQNESKSRKYLAKVLWLLSFDDDKNTLADAVDKYCIGVPPIQWLAWIPQLLTCLVGSEGKLLLNLISQVGRVYPQAVYFPIRTLYLTLKIEQRERYKSDPGPIRATAPMWRCSRIMHMQRELHPTLLSSLEGIVDQMVWFRENWHEEVLRQLQQGLAKCYSVAFEKSGAVSDAKITPHTLNFVKKLVSTFGVGLENVSNVSTMFSSAASESLARRAQATAQDPVFQKLKGQFTTDFDFSVPGSMKLHNLISKLKKWIKILEAKTKQLPKFFLIEEKCRFLSNFSAQTAEVEIPGEFLMPKPTHYYIKIARFMPRVEIVQKHNTAARRLYIRGHNGKIYPYLVMNDACLTESRREERVLQLLRLLNPCLEKRKETTKRHLFFTVPRVVAVSPQMRLVEDNPSSLSLVEIYKQRCAKKGIEHDNPISRYYDRLATVQARGTQASHQVLRDILKEVQSNMVPRSMLKEWALHTFPNATDYWTFRKMFTIQLALIGFAEFVLHLNRLNPEMLQIAQDTGKLNVAYFRFDINDATGDLDANRPVPFRLTPNISEFLTTIGVSGPLTASMIAVARCFAQPNFKVDGILKTVLRDEIIAWHKKTQEDTSSPLSAAGQPENMDSQQLVSLVQKAVTAIMTRLHNLAQFEGGESKVNTLVAAANSLDNLCRMDPAWHPWL</sequence>
<proteinExistence type="evidence at protein level"/>
<reference key="1">
    <citation type="journal article" date="1998" name="Cell">
        <title>The novel ATM-related protein TRRAP is an essential cofactor for the c-Myc and E2F oncoproteins.</title>
        <authorList>
            <person name="McMahon S.B."/>
            <person name="Van Buskirk H.A."/>
            <person name="Dugan K.A."/>
            <person name="Copeland T.D."/>
            <person name="Cole M.D."/>
        </authorList>
    </citation>
    <scope>NUCLEOTIDE SEQUENCE [MRNA] (ISOFORM 2)</scope>
    <scope>PARTIAL PROTEIN SEQUENCE</scope>
    <scope>FUNCTION</scope>
    <scope>SUBCELLULAR LOCATION</scope>
    <scope>INTERACTION WITH MYC AND E2F1</scope>
    <source>
        <tissue>Cervix carcinoma</tissue>
    </source>
</reference>
<reference key="2">
    <citation type="journal article" date="1998" name="Mol. Cell">
        <title>The 400 kDa subunit of the PCAF histone acetylase complex belongs to the ATM superfamily.</title>
        <authorList>
            <person name="Vassilev A."/>
            <person name="Yamauchi J."/>
            <person name="Kotani T."/>
            <person name="Prives C."/>
            <person name="Avantaggiati M.L."/>
            <person name="Qin J."/>
            <person name="Nakatani Y."/>
        </authorList>
    </citation>
    <scope>NUCLEOTIDE SEQUENCE [MRNA] (ISOFORM 1)</scope>
    <scope>PROTEIN SEQUENCE OF 41-90; 337-344; 369-387; 879-892; 997-1005; 1171-1184; 1237-1247; 1545-1560; 1815-1820; 1922-1934; 2211-2218; 2260-2275; 2534-2547; 2583-2594; 2706-2726; 2830-2844; 3567-3573; 3583-3598; 3604-3614; 3712-3730 AND 3822-3834</scope>
    <scope>IDENTIFICATION IN THE PCAF COMPLEX WITH TADA2L; TADA3L; TAF5L; TAF6L; TAF10; SUPT3H; TAF12 AND TAF9</scope>
    <source>
        <tissue>Fetal heart</tissue>
    </source>
</reference>
<reference key="3">
    <citation type="journal article" date="2003" name="Nature">
        <title>The DNA sequence of human chromosome 7.</title>
        <authorList>
            <person name="Hillier L.W."/>
            <person name="Fulton R.S."/>
            <person name="Fulton L.A."/>
            <person name="Graves T.A."/>
            <person name="Pepin K.H."/>
            <person name="Wagner-McPherson C."/>
            <person name="Layman D."/>
            <person name="Maas J."/>
            <person name="Jaeger S."/>
            <person name="Walker R."/>
            <person name="Wylie K."/>
            <person name="Sekhon M."/>
            <person name="Becker M.C."/>
            <person name="O'Laughlin M.D."/>
            <person name="Schaller M.E."/>
            <person name="Fewell G.A."/>
            <person name="Delehaunty K.D."/>
            <person name="Miner T.L."/>
            <person name="Nash W.E."/>
            <person name="Cordes M."/>
            <person name="Du H."/>
            <person name="Sun H."/>
            <person name="Edwards J."/>
            <person name="Bradshaw-Cordum H."/>
            <person name="Ali J."/>
            <person name="Andrews S."/>
            <person name="Isak A."/>
            <person name="Vanbrunt A."/>
            <person name="Nguyen C."/>
            <person name="Du F."/>
            <person name="Lamar B."/>
            <person name="Courtney L."/>
            <person name="Kalicki J."/>
            <person name="Ozersky P."/>
            <person name="Bielicki L."/>
            <person name="Scott K."/>
            <person name="Holmes A."/>
            <person name="Harkins R."/>
            <person name="Harris A."/>
            <person name="Strong C.M."/>
            <person name="Hou S."/>
            <person name="Tomlinson C."/>
            <person name="Dauphin-Kohlberg S."/>
            <person name="Kozlowicz-Reilly A."/>
            <person name="Leonard S."/>
            <person name="Rohlfing T."/>
            <person name="Rock S.M."/>
            <person name="Tin-Wollam A.-M."/>
            <person name="Abbott A."/>
            <person name="Minx P."/>
            <person name="Maupin R."/>
            <person name="Strowmatt C."/>
            <person name="Latreille P."/>
            <person name="Miller N."/>
            <person name="Johnson D."/>
            <person name="Murray J."/>
            <person name="Woessner J.P."/>
            <person name="Wendl M.C."/>
            <person name="Yang S.-P."/>
            <person name="Schultz B.R."/>
            <person name="Wallis J.W."/>
            <person name="Spieth J."/>
            <person name="Bieri T.A."/>
            <person name="Nelson J.O."/>
            <person name="Berkowicz N."/>
            <person name="Wohldmann P.E."/>
            <person name="Cook L.L."/>
            <person name="Hickenbotham M.T."/>
            <person name="Eldred J."/>
            <person name="Williams D."/>
            <person name="Bedell J.A."/>
            <person name="Mardis E.R."/>
            <person name="Clifton S.W."/>
            <person name="Chissoe S.L."/>
            <person name="Marra M.A."/>
            <person name="Raymond C."/>
            <person name="Haugen E."/>
            <person name="Gillett W."/>
            <person name="Zhou Y."/>
            <person name="James R."/>
            <person name="Phelps K."/>
            <person name="Iadanoto S."/>
            <person name="Bubb K."/>
            <person name="Simms E."/>
            <person name="Levy R."/>
            <person name="Clendenning J."/>
            <person name="Kaul R."/>
            <person name="Kent W.J."/>
            <person name="Furey T.S."/>
            <person name="Baertsch R.A."/>
            <person name="Brent M.R."/>
            <person name="Keibler E."/>
            <person name="Flicek P."/>
            <person name="Bork P."/>
            <person name="Suyama M."/>
            <person name="Bailey J.A."/>
            <person name="Portnoy M.E."/>
            <person name="Torrents D."/>
            <person name="Chinwalla A.T."/>
            <person name="Gish W.R."/>
            <person name="Eddy S.R."/>
            <person name="McPherson J.D."/>
            <person name="Olson M.V."/>
            <person name="Eichler E.E."/>
            <person name="Green E.D."/>
            <person name="Waterston R.H."/>
            <person name="Wilson R.K."/>
        </authorList>
    </citation>
    <scope>NUCLEOTIDE SEQUENCE [LARGE SCALE GENOMIC DNA]</scope>
</reference>
<reference key="4">
    <citation type="submission" date="2005-09" db="EMBL/GenBank/DDBJ databases">
        <authorList>
            <person name="Mural R.J."/>
            <person name="Istrail S."/>
            <person name="Sutton G.G."/>
            <person name="Florea L."/>
            <person name="Halpern A.L."/>
            <person name="Mobarry C.M."/>
            <person name="Lippert R."/>
            <person name="Walenz B."/>
            <person name="Shatkay H."/>
            <person name="Dew I."/>
            <person name="Miller J.R."/>
            <person name="Flanigan M.J."/>
            <person name="Edwards N.J."/>
            <person name="Bolanos R."/>
            <person name="Fasulo D."/>
            <person name="Halldorsson B.V."/>
            <person name="Hannenhalli S."/>
            <person name="Turner R."/>
            <person name="Yooseph S."/>
            <person name="Lu F."/>
            <person name="Nusskern D.R."/>
            <person name="Shue B.C."/>
            <person name="Zheng X.H."/>
            <person name="Zhong F."/>
            <person name="Delcher A.L."/>
            <person name="Huson D.H."/>
            <person name="Kravitz S.A."/>
            <person name="Mouchard L."/>
            <person name="Reinert K."/>
            <person name="Remington K.A."/>
            <person name="Clark A.G."/>
            <person name="Waterman M.S."/>
            <person name="Eichler E.E."/>
            <person name="Adams M.D."/>
            <person name="Hunkapiller M.W."/>
            <person name="Myers E.W."/>
            <person name="Venter J.C."/>
        </authorList>
    </citation>
    <scope>NUCLEOTIDE SEQUENCE [LARGE SCALE GENOMIC DNA]</scope>
</reference>
<reference key="5">
    <citation type="journal article" date="2003" name="Science">
        <title>Human chromosome 7: DNA sequence and biology.</title>
        <authorList>
            <person name="Scherer S.W."/>
            <person name="Cheung J."/>
            <person name="MacDonald J.R."/>
            <person name="Osborne L.R."/>
            <person name="Nakabayashi K."/>
            <person name="Herbrick J.-A."/>
            <person name="Carson A.R."/>
            <person name="Parker-Katiraee L."/>
            <person name="Skaug J."/>
            <person name="Khaja R."/>
            <person name="Zhang J."/>
            <person name="Hudek A.K."/>
            <person name="Li M."/>
            <person name="Haddad M."/>
            <person name="Duggan G.E."/>
            <person name="Fernandez B.A."/>
            <person name="Kanematsu E."/>
            <person name="Gentles S."/>
            <person name="Christopoulos C.C."/>
            <person name="Choufani S."/>
            <person name="Kwasnicka D."/>
            <person name="Zheng X.H."/>
            <person name="Lai Z."/>
            <person name="Nusskern D.R."/>
            <person name="Zhang Q."/>
            <person name="Gu Z."/>
            <person name="Lu F."/>
            <person name="Zeesman S."/>
            <person name="Nowaczyk M.J."/>
            <person name="Teshima I."/>
            <person name="Chitayat D."/>
            <person name="Shuman C."/>
            <person name="Weksberg R."/>
            <person name="Zackai E.H."/>
            <person name="Grebe T.A."/>
            <person name="Cox S.R."/>
            <person name="Kirkpatrick S.J."/>
            <person name="Rahman N."/>
            <person name="Friedman J.M."/>
            <person name="Heng H.H.Q."/>
            <person name="Pelicci P.G."/>
            <person name="Lo-Coco F."/>
            <person name="Belloni E."/>
            <person name="Shaffer L.G."/>
            <person name="Pober B."/>
            <person name="Morton C.C."/>
            <person name="Gusella J.F."/>
            <person name="Bruns G.A.P."/>
            <person name="Korf B.R."/>
            <person name="Quade B.J."/>
            <person name="Ligon A.H."/>
            <person name="Ferguson H."/>
            <person name="Higgins A.W."/>
            <person name="Leach N.T."/>
            <person name="Herrick S.R."/>
            <person name="Lemyre E."/>
            <person name="Farra C.G."/>
            <person name="Kim H.-G."/>
            <person name="Summers A.M."/>
            <person name="Gripp K.W."/>
            <person name="Roberts W."/>
            <person name="Szatmari P."/>
            <person name="Winsor E.J.T."/>
            <person name="Grzeschik K.-H."/>
            <person name="Teebi A."/>
            <person name="Minassian B.A."/>
            <person name="Kere J."/>
            <person name="Armengol L."/>
            <person name="Pujana M.A."/>
            <person name="Estivill X."/>
            <person name="Wilson M.D."/>
            <person name="Koop B.F."/>
            <person name="Tosi S."/>
            <person name="Moore G.E."/>
            <person name="Boright A.P."/>
            <person name="Zlotorynski E."/>
            <person name="Kerem B."/>
            <person name="Kroisel P.M."/>
            <person name="Petek E."/>
            <person name="Oscier D.G."/>
            <person name="Mould S.J."/>
            <person name="Doehner H."/>
            <person name="Doehner K."/>
            <person name="Rommens J.M."/>
            <person name="Vincent J.B."/>
            <person name="Venter J.C."/>
            <person name="Li P.W."/>
            <person name="Mural R.J."/>
            <person name="Adams M.D."/>
            <person name="Tsui L.-C."/>
        </authorList>
    </citation>
    <scope>NUCLEOTIDE SEQUENCE [LARGE SCALE GENOMIC DNA]</scope>
</reference>
<reference key="6">
    <citation type="journal article" date="2001" name="Mol. Cell. Biol.">
        <title>Human STAGA complex is a chromatin-acetylating transcription coactivator that interacts with pre-mRNA splicing and DNA damage-binding factors in vivo.</title>
        <authorList>
            <person name="Martinez E."/>
            <person name="Palhan V.B."/>
            <person name="Tjernberg A."/>
            <person name="Lymar E.S."/>
            <person name="Gamper A.M."/>
            <person name="Kundu T.K."/>
            <person name="Chait B.T."/>
            <person name="Roeder R.G."/>
        </authorList>
    </citation>
    <scope>SUBCELLULAR LOCATION</scope>
    <scope>IDENTIFICATION IN THE STAGA COMPLEX WITH SUPT3H; GCN5L2; KIAA0764; TAF5L; TAF6L; TADA3L; TAF10; TAF12 AND TAF9</scope>
    <scope>IDENTIFICATION BY MASS SPECTROMETRY</scope>
</reference>
<reference key="7">
    <citation type="journal article" date="1999" name="J. Biol. Chem.">
        <title>Identification of TATA-binding protein-free TAFII-containing complex subunits suggests a role in nucleosome acetylation and signal transduction.</title>
        <authorList>
            <person name="Brand M."/>
            <person name="Yamamoto K."/>
            <person name="Staub A."/>
            <person name="Tora L."/>
        </authorList>
    </citation>
    <scope>IDENTIFICATION IN THE TFTC-HAT COMPLEX WITH TAF5L; TAF6L; TADA3L; SUPT3H; TAF2; TAF4; TAF5; GCN5L2 AND TAF10</scope>
</reference>
<reference key="8">
    <citation type="journal article" date="2000" name="Cell">
        <title>Involvement of the TIP60 histone acetylase complex in DNA repair and apoptosis.</title>
        <authorList>
            <person name="Ikura T."/>
            <person name="Ogryzko V.V."/>
            <person name="Grigoriev M."/>
            <person name="Groisman R."/>
            <person name="Wang J."/>
            <person name="Horikoshi M."/>
            <person name="Scully R."/>
            <person name="Qin J."/>
            <person name="Nakatani Y."/>
        </authorList>
    </citation>
    <scope>IDENTIFICATION IN THE TIP60 HAT COMPLEX WITH KAT5; RUVBL1 AND RUVBL2</scope>
</reference>
<reference key="9">
    <citation type="journal article" date="2000" name="Mol. Cell. Biol.">
        <title>The essential cofactor TRRAP recruits the histone acetyltransferase hGCN5 to c-Myc.</title>
        <authorList>
            <person name="McMahon S.B."/>
            <person name="Wood M.A."/>
            <person name="Cole M.D."/>
        </authorList>
    </citation>
    <scope>INTERACTION WITH GCN5L2</scope>
</reference>
<reference key="10">
    <citation type="journal article" date="2001" name="J. Biol. Chem.">
        <title>E2F transcriptional activation requires TRRAP and GCN5 cofactors.</title>
        <authorList>
            <person name="Lang S.E."/>
            <person name="McMahon S.B."/>
            <person name="Cole M.D."/>
            <person name="Hearing P."/>
        </authorList>
    </citation>
    <scope>INTERACTION WITH E2F1 AND E2F4</scope>
    <scope>FUNCTION</scope>
</reference>
<reference key="11">
    <citation type="journal article" date="2001" name="Genes Dev.">
        <title>The ATM-related domain of TRRAP is required for histone acetyltransferase recruitment and Myc-dependent oncogenesis.</title>
        <authorList>
            <person name="Park J."/>
            <person name="Kunjibettu S."/>
            <person name="McMahon S.B."/>
            <person name="Cole M.D."/>
        </authorList>
    </citation>
    <scope>DOMAIN</scope>
</reference>
<reference key="12">
    <citation type="journal article" date="2002" name="Mol. Cell. Biol.">
        <title>Transcriptional regulation of the mdm2 oncogene by p53 requires TRRAP acetyltransferase complexes.</title>
        <authorList>
            <person name="Ard P.G."/>
            <person name="Chatterjee C."/>
            <person name="Kunjibettu S."/>
            <person name="Adside L.R."/>
            <person name="Gralinski L.E."/>
            <person name="McMahon S.B."/>
        </authorList>
    </citation>
    <scope>FUNCTION</scope>
    <scope>INTERACTION WITH TP53</scope>
</reference>
<reference key="13">
    <citation type="journal article" date="2002" name="Mol. Cell. Biol.">
        <title>BAF53 forms distinct nuclear complexes and functions as a critical c-Myc-interacting nuclear cofactor for oncogenic transformation.</title>
        <authorList>
            <person name="Park J."/>
            <person name="Wood M.A."/>
            <person name="Cole M.D."/>
        </authorList>
    </citation>
    <scope>IDENTIFICATION IN THE BAF53 COMPLEX WITH BAF53A; RUVBL1 AND SMARCA4</scope>
</reference>
<reference key="14">
    <citation type="journal article" date="2003" name="Oncogene">
        <title>The adenovirus E1A oncoprotein recruits the cellular TRRAP/GCN5 histone acetyltransferase complex.</title>
        <authorList>
            <person name="Lang S.E."/>
            <person name="Hearing P."/>
        </authorList>
    </citation>
    <scope>FUNCTION</scope>
</reference>
<reference key="15">
    <citation type="journal article" date="2003" name="J. Biol. Chem.">
        <title>c-Myc transformation domain recruits the human STAGA complex and requires TRRAP and GCN5 acetylase activity for transcription activation.</title>
        <authorList>
            <person name="Liu X."/>
            <person name="Tesfai J."/>
            <person name="Evrard Y.A."/>
            <person name="Dent S.Y.R."/>
            <person name="Martinez E."/>
        </authorList>
    </citation>
    <scope>FUNCTION</scope>
</reference>
<reference key="16">
    <citation type="journal article" date="2004" name="Mol. Cell. Biol.">
        <title>Structural and functional conservation of the NuA4 histone acetyltransferase complex from yeast to humans.</title>
        <authorList>
            <person name="Doyon Y."/>
            <person name="Selleck W."/>
            <person name="Lane W.S."/>
            <person name="Tan S."/>
            <person name="Cote J."/>
        </authorList>
    </citation>
    <scope>FUNCTION</scope>
    <scope>IDENTIFICATION BY MASS SPECTROMETRY</scope>
    <scope>IDENTIFICATION IN THE NUA4 COMPLEX</scope>
</reference>
<reference key="17">
    <citation type="journal article" date="2008" name="Mol. Cell">
        <title>A TFTC/STAGA module mediates histone H2A and H2B deubiquitination, coactivates nuclear receptors, and counteracts heterochromatin silencing.</title>
        <authorList>
            <person name="Zhao Y."/>
            <person name="Lang G."/>
            <person name="Ito S."/>
            <person name="Bonnet J."/>
            <person name="Metzger E."/>
            <person name="Sawatsubashi S."/>
            <person name="Suzuki E."/>
            <person name="Le Guezennec X."/>
            <person name="Stunnenberg H.G."/>
            <person name="Krasnov A."/>
            <person name="Georgieva S.G."/>
            <person name="Schuele R."/>
            <person name="Takeyama K."/>
            <person name="Kato S."/>
            <person name="Tora L."/>
            <person name="Devys D."/>
        </authorList>
    </citation>
    <scope>IDENTIFICATION IN STAGA COMPLEX</scope>
</reference>
<reference key="18">
    <citation type="journal article" date="2008" name="Mol. Cell">
        <title>Kinase-selective enrichment enables quantitative phosphoproteomics of the kinome across the cell cycle.</title>
        <authorList>
            <person name="Daub H."/>
            <person name="Olsen J.V."/>
            <person name="Bairlein M."/>
            <person name="Gnad F."/>
            <person name="Oppermann F.S."/>
            <person name="Korner R."/>
            <person name="Greff Z."/>
            <person name="Keri G."/>
            <person name="Stemmann O."/>
            <person name="Mann M."/>
        </authorList>
    </citation>
    <scope>PHOSPHORYLATION [LARGE SCALE ANALYSIS] AT SER-2051</scope>
    <scope>IDENTIFICATION BY MASS SPECTROMETRY [LARGE SCALE ANALYSIS]</scope>
    <source>
        <tissue>Cervix carcinoma</tissue>
    </source>
</reference>
<reference key="19">
    <citation type="journal article" date="2008" name="Mol. Cell. Biol.">
        <title>Transcriptional activation of histone genes requires NPAT-dependent recruitment of TRRAP-Tip60 complex to histone promoters during the G1/S phase transition.</title>
        <authorList>
            <person name="DeRan M."/>
            <person name="Pulvino M."/>
            <person name="Greene E."/>
            <person name="Su C."/>
            <person name="Zhao J."/>
        </authorList>
    </citation>
    <scope>FUNCTION</scope>
    <scope>IDENTIFICATION BY MASS SPECTROMETRY</scope>
    <scope>INTERACTION WITH NPAT</scope>
</reference>
<reference key="20">
    <citation type="journal article" date="2008" name="Proc. Natl. Acad. Sci. U.S.A.">
        <title>A quantitative atlas of mitotic phosphorylation.</title>
        <authorList>
            <person name="Dephoure N."/>
            <person name="Zhou C."/>
            <person name="Villen J."/>
            <person name="Beausoleil S.A."/>
            <person name="Bakalarski C.E."/>
            <person name="Elledge S.J."/>
            <person name="Gygi S.P."/>
        </authorList>
    </citation>
    <scope>PHOSPHORYLATION [LARGE SCALE ANALYSIS] AT SER-2051 AND SER-2077</scope>
    <scope>IDENTIFICATION BY MASS SPECTROMETRY [LARGE SCALE ANALYSIS]</scope>
    <source>
        <tissue>Cervix carcinoma</tissue>
    </source>
</reference>
<reference key="21">
    <citation type="journal article" date="2009" name="Science">
        <title>Lysine acetylation targets protein complexes and co-regulates major cellular functions.</title>
        <authorList>
            <person name="Choudhary C."/>
            <person name="Kumar C."/>
            <person name="Gnad F."/>
            <person name="Nielsen M.L."/>
            <person name="Rehman M."/>
            <person name="Walther T.C."/>
            <person name="Olsen J.V."/>
            <person name="Mann M."/>
        </authorList>
    </citation>
    <scope>ACETYLATION [LARGE SCALE ANALYSIS] AT LYS-3078</scope>
    <scope>IDENTIFICATION BY MASS SPECTROMETRY [LARGE SCALE ANALYSIS]</scope>
</reference>
<reference key="22">
    <citation type="journal article" date="2010" name="J. Biol. Chem.">
        <title>Tti1 and Tel2 are critical factors in mammalian target of rapamycin complex assembly.</title>
        <authorList>
            <person name="Kaizuka T."/>
            <person name="Hara T."/>
            <person name="Oshiro N."/>
            <person name="Kikkawa U."/>
            <person name="Yonezawa K."/>
            <person name="Takehana K."/>
            <person name="Iemura S."/>
            <person name="Natsume T."/>
            <person name="Mizushima N."/>
        </authorList>
    </citation>
    <scope>INTERACTION WITH TELO2 AND TTI1</scope>
</reference>
<reference key="23">
    <citation type="journal article" date="2010" name="Sci. Signal.">
        <title>Quantitative phosphoproteomics reveals widespread full phosphorylation site occupancy during mitosis.</title>
        <authorList>
            <person name="Olsen J.V."/>
            <person name="Vermeulen M."/>
            <person name="Santamaria A."/>
            <person name="Kumar C."/>
            <person name="Miller M.L."/>
            <person name="Jensen L.J."/>
            <person name="Gnad F."/>
            <person name="Cox J."/>
            <person name="Jensen T.S."/>
            <person name="Nigg E.A."/>
            <person name="Brunak S."/>
            <person name="Mann M."/>
        </authorList>
    </citation>
    <scope>IDENTIFICATION BY MASS SPECTROMETRY [LARGE SCALE ANALYSIS]</scope>
    <source>
        <tissue>Cervix carcinoma</tissue>
    </source>
</reference>
<reference key="24">
    <citation type="journal article" date="2011" name="BMC Syst. Biol.">
        <title>Initial characterization of the human central proteome.</title>
        <authorList>
            <person name="Burkard T.R."/>
            <person name="Planyavsky M."/>
            <person name="Kaupe I."/>
            <person name="Breitwieser F.P."/>
            <person name="Buerckstuemmer T."/>
            <person name="Bennett K.L."/>
            <person name="Superti-Furga G."/>
            <person name="Colinge J."/>
        </authorList>
    </citation>
    <scope>IDENTIFICATION BY MASS SPECTROMETRY [LARGE SCALE ANALYSIS]</scope>
</reference>
<reference key="25">
    <citation type="journal article" date="2011" name="Nat. Genet.">
        <title>Exome sequencing identifies GRIN2A as frequently mutated in melanoma.</title>
        <authorList>
            <person name="Wei X."/>
            <person name="Walia V."/>
            <person name="Lin J.C."/>
            <person name="Teer J.K."/>
            <person name="Prickett T.D."/>
            <person name="Gartner J."/>
            <person name="Davis S."/>
            <person name="Stemke-Hale K."/>
            <person name="Davies M.A."/>
            <person name="Gershenwald J.E."/>
            <person name="Robinson W."/>
            <person name="Robinson S."/>
            <person name="Rosenberg S.A."/>
            <person name="Samuels Y."/>
        </authorList>
    </citation>
    <scope>PROBABLE INVOLVEMENT IN MELANOMA</scope>
    <scope>VARIANT PHE-722</scope>
    <scope>CHARACTERIZATION OF VARIANT PHE-722</scope>
</reference>
<reference key="26">
    <citation type="journal article" date="2012" name="Mol. Cell. Proteomics">
        <title>Comparative large-scale characterisation of plant vs. mammal proteins reveals similar and idiosyncratic N-alpha acetylation features.</title>
        <authorList>
            <person name="Bienvenut W.V."/>
            <person name="Sumpton D."/>
            <person name="Martinez A."/>
            <person name="Lilla S."/>
            <person name="Espagne C."/>
            <person name="Meinnel T."/>
            <person name="Giglione C."/>
        </authorList>
    </citation>
    <scope>ACETYLATION [LARGE SCALE ANALYSIS] AT ALA-2</scope>
    <scope>CLEAVAGE OF INITIATOR METHIONINE [LARGE SCALE ANALYSIS]</scope>
    <scope>IDENTIFICATION BY MASS SPECTROMETRY [LARGE SCALE ANALYSIS]</scope>
</reference>
<reference key="27">
    <citation type="journal article" date="2013" name="J. Proteome Res.">
        <title>Toward a comprehensive characterization of a human cancer cell phosphoproteome.</title>
        <authorList>
            <person name="Zhou H."/>
            <person name="Di Palma S."/>
            <person name="Preisinger C."/>
            <person name="Peng M."/>
            <person name="Polat A.N."/>
            <person name="Heck A.J."/>
            <person name="Mohammed S."/>
        </authorList>
    </citation>
    <scope>PHOSPHORYLATION [LARGE SCALE ANALYSIS] AT SER-1628; SER-2051 AND SER-2077</scope>
    <scope>IDENTIFICATION BY MASS SPECTROMETRY [LARGE SCALE ANALYSIS]</scope>
    <source>
        <tissue>Cervix carcinoma</tissue>
        <tissue>Erythroleukemia</tissue>
    </source>
</reference>
<reference key="28">
    <citation type="journal article" date="2014" name="J. Proteomics">
        <title>An enzyme assisted RP-RPLC approach for in-depth analysis of human liver phosphoproteome.</title>
        <authorList>
            <person name="Bian Y."/>
            <person name="Song C."/>
            <person name="Cheng K."/>
            <person name="Dong M."/>
            <person name="Wang F."/>
            <person name="Huang J."/>
            <person name="Sun D."/>
            <person name="Wang L."/>
            <person name="Ye M."/>
            <person name="Zou H."/>
        </authorList>
    </citation>
    <scope>IDENTIFICATION BY MASS SPECTROMETRY [LARGE SCALE ANALYSIS]</scope>
    <source>
        <tissue>Liver</tissue>
    </source>
</reference>
<reference key="29">
    <citation type="journal article" date="2014" name="Nature">
        <title>ANP32E is a histone chaperone that removes H2A.Z from chromatin.</title>
        <authorList>
            <person name="Obri A."/>
            <person name="Ouararhni K."/>
            <person name="Papin C."/>
            <person name="Diebold M.L."/>
            <person name="Padmanabhan K."/>
            <person name="Marek M."/>
            <person name="Stoll I."/>
            <person name="Roy L."/>
            <person name="Reilly P.T."/>
            <person name="Mak T.W."/>
            <person name="Dimitrov S."/>
            <person name="Romier C."/>
            <person name="Hamiche A."/>
        </authorList>
    </citation>
    <scope>FUNCTION</scope>
    <scope>IDENTIFICATION IN THE SWR1-LIKE COMPLEX</scope>
</reference>
<reference key="30">
    <citation type="journal article" date="2017" name="Nat. Struct. Mol. Biol.">
        <title>Site-specific mapping of the human SUMO proteome reveals co-modification with phosphorylation.</title>
        <authorList>
            <person name="Hendriks I.A."/>
            <person name="Lyon D."/>
            <person name="Young C."/>
            <person name="Jensen L.J."/>
            <person name="Vertegaal A.C."/>
            <person name="Nielsen M.L."/>
        </authorList>
    </citation>
    <scope>SUMOYLATION [LARGE SCALE ANALYSIS] AT LYS-2543</scope>
    <scope>IDENTIFICATION BY MASS SPECTROMETRY [LARGE SCALE ANALYSIS]</scope>
</reference>
<reference key="31">
    <citation type="journal article" date="2007" name="Nature">
        <title>Patterns of somatic mutation in human cancer genomes.</title>
        <authorList>
            <person name="Greenman C."/>
            <person name="Stephens P."/>
            <person name="Smith R."/>
            <person name="Dalgliesh G.L."/>
            <person name="Hunter C."/>
            <person name="Bignell G."/>
            <person name="Davies H."/>
            <person name="Teague J."/>
            <person name="Butler A."/>
            <person name="Stevens C."/>
            <person name="Edkins S."/>
            <person name="O'Meara S."/>
            <person name="Vastrik I."/>
            <person name="Schmidt E.E."/>
            <person name="Avis T."/>
            <person name="Barthorpe S."/>
            <person name="Bhamra G."/>
            <person name="Buck G."/>
            <person name="Choudhury B."/>
            <person name="Clements J."/>
            <person name="Cole J."/>
            <person name="Dicks E."/>
            <person name="Forbes S."/>
            <person name="Gray K."/>
            <person name="Halliday K."/>
            <person name="Harrison R."/>
            <person name="Hills K."/>
            <person name="Hinton J."/>
            <person name="Jenkinson A."/>
            <person name="Jones D."/>
            <person name="Menzies A."/>
            <person name="Mironenko T."/>
            <person name="Perry J."/>
            <person name="Raine K."/>
            <person name="Richardson D."/>
            <person name="Shepherd R."/>
            <person name="Small A."/>
            <person name="Tofts C."/>
            <person name="Varian J."/>
            <person name="Webb T."/>
            <person name="West S."/>
            <person name="Widaa S."/>
            <person name="Yates A."/>
            <person name="Cahill D.P."/>
            <person name="Louis D.N."/>
            <person name="Goldstraw P."/>
            <person name="Nicholson A.G."/>
            <person name="Brasseur F."/>
            <person name="Looijenga L."/>
            <person name="Weber B.L."/>
            <person name="Chiew Y.-E."/>
            <person name="DeFazio A."/>
            <person name="Greaves M.F."/>
            <person name="Green A.R."/>
            <person name="Campbell P."/>
            <person name="Birney E."/>
            <person name="Easton D.F."/>
            <person name="Chenevix-Trench G."/>
            <person name="Tan M.-H."/>
            <person name="Khoo S.K."/>
            <person name="Teh B.T."/>
            <person name="Yuen S.T."/>
            <person name="Leung S.Y."/>
            <person name="Wooster R."/>
            <person name="Futreal P.A."/>
            <person name="Stratton M.R."/>
        </authorList>
    </citation>
    <scope>VARIANTS [LARGE SCALE ANALYSIS] CYS-893; GLY-1070; HIS-1669; HIS-1724; VAL-1925; LEU-1932; LEU-1947; GLY-2139; TRP-2302; GLY-2433; LEU-2690; ASP-2750; GLU-2801 AND MET-2931</scope>
</reference>
<reference key="32">
    <citation type="journal article" date="2018" name="BMC Med. Genet.">
        <title>De novo variant of TRRAP in a patient with very early onset psychosis in the context of non-verbal learning disability and obsessive-compulsive disorder: a case report.</title>
        <authorList>
            <person name="Mavros C.F."/>
            <person name="Brownstein C.A."/>
            <person name="Thyagrajan R."/>
            <person name="Genetti C.A."/>
            <person name="Tembulkar S."/>
            <person name="Graber K."/>
            <person name="Murphy Q."/>
            <person name="Cabral K."/>
            <person name="VanNoy G.E."/>
            <person name="Bainbridge M."/>
            <person name="Shi J."/>
            <person name="Agrawal P.B."/>
            <person name="Beggs A.H."/>
            <person name="D'Angelo E."/>
            <person name="Gonzalez-Heydrich J."/>
        </authorList>
    </citation>
    <scope>INVOLVEMENT IN DEDDFA</scope>
    <scope>VARIANT DEDDFA GLN-2004</scope>
</reference>
<reference key="33">
    <citation type="journal article" date="2019" name="Am. J. Hum. Genet.">
        <title>Missense Variants in the Histone Acetyltransferase Complex Component Gene TRRAP Cause Autism and Syndromic Intellectual Disability.</title>
        <authorList>
            <consortium name="CAUSES Study"/>
            <consortium name="Deciphering Developmental Disorders study"/>
            <person name="Cogne B."/>
            <person name="Ehresmann S."/>
            <person name="Beauregard-Lacroix E."/>
            <person name="Rousseau J."/>
            <person name="Besnard T."/>
            <person name="Garcia T."/>
            <person name="Petrovski S."/>
            <person name="Avni S."/>
            <person name="McWalter K."/>
            <person name="Blackburn P.R."/>
            <person name="Sanders S.J."/>
            <person name="Uguen K."/>
            <person name="Harris J."/>
            <person name="Cohen J.S."/>
            <person name="Blyth M."/>
            <person name="Lehman A."/>
            <person name="Berg J."/>
            <person name="Li M.H."/>
            <person name="Kini U."/>
            <person name="Joss S."/>
            <person name="von der Lippe C."/>
            <person name="Gordon C.T."/>
            <person name="Humberson J.B."/>
            <person name="Robak L."/>
            <person name="Scott D.A."/>
            <person name="Sutton V.R."/>
            <person name="Skraban C.M."/>
            <person name="Johnston J.J."/>
            <person name="Poduri A."/>
            <person name="Nordenskjoeld M."/>
            <person name="Shashi V."/>
            <person name="Gerkes E.H."/>
            <person name="Bongers E.M.H.F."/>
            <person name="Gilissen C."/>
            <person name="Zarate Y.A."/>
            <person name="Kvarnung M."/>
            <person name="Lally K.P."/>
            <person name="Kulch P.A."/>
            <person name="Daniels B."/>
            <person name="Hernandez-Garcia A."/>
            <person name="Stong N."/>
            <person name="McGaughran J."/>
            <person name="Retterer K."/>
            <person name="Tveten K."/>
            <person name="Sullivan J."/>
            <person name="Geisheker M.R."/>
            <person name="Stray-Pedersen A."/>
            <person name="Tarpinian J.M."/>
            <person name="Klee E.W."/>
            <person name="Sapp J.C."/>
            <person name="Zyskind J."/>
            <person name="Holla O.L."/>
            <person name="Bedoukian E."/>
            <person name="Filippini F."/>
            <person name="Guimier A."/>
            <person name="Picard A."/>
            <person name="Busk O.L."/>
            <person name="Punetha J."/>
            <person name="Pfundt R."/>
            <person name="Lindstrand A."/>
            <person name="Nordgren A."/>
            <person name="Kalb F."/>
            <person name="Desai M."/>
            <person name="Ebanks A.H."/>
            <person name="Jhangiani S.N."/>
            <person name="Dewan T."/>
            <person name="Coban Akdemir Z.H."/>
            <person name="Telegrafi A."/>
            <person name="Zackai E.H."/>
            <person name="Begtrup A."/>
            <person name="Song X."/>
            <person name="Toutain A."/>
            <person name="Wentzensen I.M."/>
            <person name="Odent S."/>
            <person name="Bonneau D."/>
            <person name="Latypova X."/>
            <person name="Deb W."/>
            <person name="Redon S."/>
            <person name="Bilan F."/>
            <person name="Legendre M."/>
            <person name="Troyer C."/>
            <person name="Whitlock K."/>
            <person name="Caluseriu O."/>
            <person name="Murphree M.I."/>
            <person name="Pichurin P.N."/>
            <person name="Agre K."/>
            <person name="Gavrilova R."/>
            <person name="Rinne T."/>
            <person name="Park M."/>
            <person name="Shain C."/>
            <person name="Heinzen E.L."/>
            <person name="Xiao R."/>
            <person name="Amiel J."/>
            <person name="Lyonnet S."/>
            <person name="Isidor B."/>
            <person name="Biesecker L.G."/>
            <person name="Lowenstein D."/>
            <person name="Posey J.E."/>
            <person name="Denomme-Pichon A.S."/>
            <person name="Ferec C."/>
            <person name="Yang X.J."/>
            <person name="Rosenfeld J.A."/>
            <person name="Gilbert-Dussardier B."/>
            <person name="Audebert-Bellanger S."/>
            <person name="Redon R."/>
            <person name="Stessman H.A.F."/>
            <person name="Nellaker C."/>
            <person name="Yang Y."/>
            <person name="Lupski J.R."/>
            <person name="Goldstein D.B."/>
            <person name="Eichler E.E."/>
            <person name="Bolduc F."/>
            <person name="Bezieau S."/>
            <person name="Kuery S."/>
            <person name="Campeau P.M."/>
        </authorList>
    </citation>
    <scope>VARIANTS DEDDFA PHE-805; LEU-860; LEU-893; MET-1031; GLN-1035; ARG-1037; THR-1043; GLY-1104; LYS-1106; TRP-1111; ARG-1159; CYS-1859; CYS-1866; ARG-1866; ARG-1883; LEU-1932 AND GLN-3757</scope>
</reference>
<reference key="34">
    <citation type="journal article" date="2019" name="Clin. Genet.">
        <title>Novel TRRAP mutation causes autosomal dominant non-syndromic hearing loss.</title>
        <authorList>
            <person name="Xia W."/>
            <person name="Hu J."/>
            <person name="Ma J."/>
            <person name="Huang J."/>
            <person name="Wang X."/>
            <person name="Jiang N."/>
            <person name="Zhang J."/>
            <person name="Ma Z."/>
            <person name="Ma D."/>
        </authorList>
    </citation>
    <scope>VARIANTS DFNA75 CYS-171 AND ASN-394</scope>
    <scope>VARIANT ASP-2750</scope>
    <scope>INVOLVEMENT IN DFNA75</scope>
</reference>
<accession>Q9Y4A5</accession>
<accession>A4D265</accession>
<accession>O75218</accession>
<accession>Q9Y631</accession>
<accession>Q9Y6H4</accession>
<organism>
    <name type="scientific">Homo sapiens</name>
    <name type="common">Human</name>
    <dbReference type="NCBI Taxonomy" id="9606"/>
    <lineage>
        <taxon>Eukaryota</taxon>
        <taxon>Metazoa</taxon>
        <taxon>Chordata</taxon>
        <taxon>Craniata</taxon>
        <taxon>Vertebrata</taxon>
        <taxon>Euteleostomi</taxon>
        <taxon>Mammalia</taxon>
        <taxon>Eutheria</taxon>
        <taxon>Euarchontoglires</taxon>
        <taxon>Primates</taxon>
        <taxon>Haplorrhini</taxon>
        <taxon>Catarrhini</taxon>
        <taxon>Hominidae</taxon>
        <taxon>Homo</taxon>
    </lineage>
</organism>
<feature type="initiator methionine" description="Removed" evidence="34">
    <location>
        <position position="1"/>
    </location>
</feature>
<feature type="chain" id="PRO_0000088851" description="Transformation/transcription domain-associated protein">
    <location>
        <begin position="2"/>
        <end position="3859"/>
    </location>
</feature>
<feature type="domain" description="FAT" evidence="4">
    <location>
        <begin position="2692"/>
        <end position="3275"/>
    </location>
</feature>
<feature type="domain" description="PI3K/PI4K catalytic" evidence="3">
    <location>
        <begin position="3500"/>
        <end position="3823"/>
    </location>
</feature>
<feature type="domain" description="FATC" evidence="4 5">
    <location>
        <begin position="3827"/>
        <end position="3859"/>
    </location>
</feature>
<feature type="region of interest" description="Disordered" evidence="6">
    <location>
        <begin position="491"/>
        <end position="541"/>
    </location>
</feature>
<feature type="region of interest" description="Interaction with TP53" evidence="14">
    <location>
        <begin position="2010"/>
        <end position="2388"/>
    </location>
</feature>
<feature type="region of interest" description="Disordered" evidence="6">
    <location>
        <begin position="2023"/>
        <end position="2044"/>
    </location>
</feature>
<feature type="region of interest" description="Disordered" evidence="6">
    <location>
        <begin position="2543"/>
        <end position="2578"/>
    </location>
</feature>
<feature type="region of interest" description="G-loop" evidence="3">
    <location>
        <begin position="3506"/>
        <end position="3512"/>
    </location>
</feature>
<feature type="region of interest" description="Catalytic loop" evidence="3">
    <location>
        <begin position="3687"/>
        <end position="3695"/>
    </location>
</feature>
<feature type="region of interest" description="Activation loop" evidence="3">
    <location>
        <begin position="3707"/>
        <end position="3732"/>
    </location>
</feature>
<feature type="short sequence motif" description="Bipartite nuclear localization signal" evidence="2">
    <location>
        <begin position="2047"/>
        <end position="2062"/>
    </location>
</feature>
<feature type="compositionally biased region" description="Pro residues" evidence="6">
    <location>
        <begin position="491"/>
        <end position="526"/>
    </location>
</feature>
<feature type="compositionally biased region" description="Basic and acidic residues" evidence="6">
    <location>
        <begin position="529"/>
        <end position="539"/>
    </location>
</feature>
<feature type="compositionally biased region" description="Low complexity" evidence="6">
    <location>
        <begin position="2033"/>
        <end position="2044"/>
    </location>
</feature>
<feature type="compositionally biased region" description="Basic and acidic residues" evidence="6">
    <location>
        <begin position="2543"/>
        <end position="2554"/>
    </location>
</feature>
<feature type="modified residue" description="N-acetylalanine" evidence="34">
    <location>
        <position position="2"/>
    </location>
</feature>
<feature type="modified residue" description="Phosphoserine" evidence="35">
    <location>
        <position position="1628"/>
    </location>
</feature>
<feature type="modified residue" description="Phosphoserine" evidence="31 32 35">
    <location>
        <position position="2051"/>
    </location>
</feature>
<feature type="modified residue" description="Phosphoserine" evidence="31 35">
    <location>
        <position position="2077"/>
    </location>
</feature>
<feature type="modified residue" description="N6-acetyllysine" evidence="33">
    <location>
        <position position="3078"/>
    </location>
</feature>
<feature type="cross-link" description="Glycyl lysine isopeptide (Lys-Gly) (interchain with G-Cter in SUMO2)" evidence="36">
    <location>
        <position position="2543"/>
    </location>
</feature>
<feature type="splice variant" id="VSP_009102" description="In isoform 2." evidence="29">
    <location>
        <begin position="1492"/>
        <end position="1509"/>
    </location>
</feature>
<feature type="splice variant" id="VSP_009103" description="In isoform 2." evidence="29">
    <original>GKPTWSGMHSSS</original>
    <variation>A</variation>
    <location>
        <begin position="3001"/>
        <end position="3012"/>
    </location>
</feature>
<feature type="sequence variant" id="VAR_083794" description="In DFNA75; uncertain significance; dbSNP:rs200157211." evidence="26">
    <original>R</original>
    <variation>C</variation>
    <location>
        <position position="171"/>
    </location>
</feature>
<feature type="sequence variant" id="VAR_083795" description="In DFNA75; uncertain significance; dbSNP:rs1554407965." evidence="26">
    <original>D</original>
    <variation>N</variation>
    <location>
        <position position="394"/>
    </location>
</feature>
<feature type="sequence variant" id="VAR_067754" description="Found in a cutaneous malignant melanoma sample; somatic mutation; induces cell transformation and confers resistance to apoptosis; dbSNP:rs147405090." evidence="22">
    <original>S</original>
    <variation>F</variation>
    <location>
        <position position="722"/>
    </location>
</feature>
<feature type="sequence variant" id="VAR_082969" description="In DEDDFA; uncertain significance; dbSNP:rs1562940289." evidence="25">
    <original>L</original>
    <variation>F</variation>
    <location>
        <position position="805"/>
    </location>
</feature>
<feature type="sequence variant" id="VAR_082970" description="In DEDDFA; uncertain significance." evidence="25">
    <original>F</original>
    <variation>L</variation>
    <location>
        <position position="860"/>
    </location>
</feature>
<feature type="sequence variant" id="VAR_028359" description="In dbSNP:rs17161510.">
    <original>R</original>
    <variation>L</variation>
    <location>
        <position position="878"/>
    </location>
</feature>
<feature type="sequence variant" id="VAR_041658" description="In an ovarian serous carcinoma sample; somatic mutation." evidence="18">
    <original>R</original>
    <variation>C</variation>
    <location>
        <position position="893"/>
    </location>
</feature>
<feature type="sequence variant" id="VAR_082971" description="In DEDDFA; uncertain significance." evidence="25">
    <original>R</original>
    <variation>L</variation>
    <location>
        <position position="893"/>
    </location>
</feature>
<feature type="sequence variant" id="VAR_082972" description="In DEDDFA; dbSNP:rs1187165148." evidence="25">
    <original>I</original>
    <variation>M</variation>
    <location>
        <position position="1031"/>
    </location>
</feature>
<feature type="sequence variant" id="VAR_082973" description="In DEDDFA; uncertain significance; dbSNP:rs2116495143." evidence="25">
    <original>R</original>
    <variation>Q</variation>
    <location>
        <position position="1035"/>
    </location>
</feature>
<feature type="sequence variant" id="VAR_082974" description="In DEDDFA; uncertain significance." evidence="25">
    <original>S</original>
    <variation>R</variation>
    <location>
        <position position="1037"/>
    </location>
</feature>
<feature type="sequence variant" id="VAR_082975" description="In DEDDFA; dbSNP:rs1562945106." evidence="25">
    <original>A</original>
    <variation>T</variation>
    <location>
        <position position="1043"/>
    </location>
</feature>
<feature type="sequence variant" id="VAR_041659" description="In dbSNP:rs55920979." evidence="18">
    <original>S</original>
    <variation>G</variation>
    <location>
        <position position="1070"/>
    </location>
</feature>
<feature type="sequence variant" id="VAR_082976" description="In DEDDFA; dbSNP:rs1790257064." evidence="25">
    <original>E</original>
    <variation>G</variation>
    <location>
        <position position="1104"/>
    </location>
</feature>
<feature type="sequence variant" id="VAR_082977" description="In DEDDFA; dbSNP:rs1584324956." evidence="25">
    <original>E</original>
    <variation>K</variation>
    <location>
        <position position="1106"/>
    </location>
</feature>
<feature type="sequence variant" id="VAR_082978" description="In DEDDFA; uncertain significance." evidence="25">
    <original>G</original>
    <variation>W</variation>
    <location>
        <position position="1111"/>
    </location>
</feature>
<feature type="sequence variant" id="VAR_082979" description="In DEDDFA; dbSNP:rs1790288810." evidence="25">
    <original>G</original>
    <variation>R</variation>
    <location>
        <position position="1159"/>
    </location>
</feature>
<feature type="sequence variant" id="VAR_041660" description="In a colorectal adenocarcinoma sample; somatic mutation; dbSNP:rs373632999." evidence="18">
    <original>R</original>
    <variation>H</variation>
    <location>
        <position position="1669"/>
    </location>
</feature>
<feature type="sequence variant" id="VAR_041661" description="In a gastric adenocarcinoma sample; somatic mutation; dbSNP:rs782203759." evidence="18">
    <original>R</original>
    <variation>H</variation>
    <location>
        <position position="1724"/>
    </location>
</feature>
<feature type="sequence variant" id="VAR_082980" description="In DEDDFA; dbSNP:rs1791432323." evidence="25">
    <original>R</original>
    <variation>C</variation>
    <location>
        <position position="1859"/>
    </location>
</feature>
<feature type="sequence variant" id="VAR_082981" description="In DEDDFA; uncertain significance; dbSNP:rs1562957576." evidence="25">
    <original>W</original>
    <variation>C</variation>
    <location>
        <position position="1866"/>
    </location>
</feature>
<feature type="sequence variant" id="VAR_082982" description="In DEDDFA; dbSNP:rs1562957569." evidence="25">
    <original>W</original>
    <variation>R</variation>
    <location>
        <position position="1866"/>
    </location>
</feature>
<feature type="sequence variant" id="VAR_082983" description="In DEDDFA." evidence="25">
    <original>G</original>
    <variation>R</variation>
    <location>
        <position position="1883"/>
    </location>
</feature>
<feature type="sequence variant" id="VAR_041662" description="In dbSNP:rs56197298." evidence="18">
    <original>A</original>
    <variation>V</variation>
    <location>
        <position position="1925"/>
    </location>
</feature>
<feature type="sequence variant" id="VAR_041663" description="In DEDDFA; uncertain significance." evidence="18 25">
    <original>P</original>
    <variation>L</variation>
    <location>
        <position position="1932"/>
    </location>
</feature>
<feature type="sequence variant" id="VAR_041664" description="In an ovarian mucinous carcinoma sample; somatic mutation." evidence="18">
    <original>R</original>
    <variation>L</variation>
    <location>
        <position position="1947"/>
    </location>
</feature>
<feature type="sequence variant" id="VAR_082984" description="In DEDDFA; uncertain significance; dbSNP:rs1562959030." evidence="24">
    <original>R</original>
    <variation>Q</variation>
    <location>
        <position position="2004"/>
    </location>
</feature>
<feature type="sequence variant" id="VAR_041665" description="In dbSNP:rs34185633." evidence="18">
    <original>W</original>
    <variation>G</variation>
    <location>
        <position position="2139"/>
    </location>
</feature>
<feature type="sequence variant" id="VAR_041666" description="In a colorectal adenocarcinoma sample; somatic mutation; dbSNP:rs528967912." evidence="18">
    <original>R</original>
    <variation>W</variation>
    <location>
        <position position="2302"/>
    </location>
</feature>
<feature type="sequence variant" id="VAR_041667" description="In dbSNP:rs35634065." evidence="18">
    <original>S</original>
    <variation>G</variation>
    <location>
        <position position="2433"/>
    </location>
</feature>
<feature type="sequence variant" id="VAR_041668" description="In a lung large cell carcinoma sample; somatic mutation; dbSNP:rs753661271." evidence="18">
    <original>P</original>
    <variation>L</variation>
    <location>
        <position position="2690"/>
    </location>
</feature>
<feature type="sequence variant" id="VAR_041669" description="In dbSNP:rs55755466." evidence="18 26">
    <original>E</original>
    <variation>D</variation>
    <location>
        <position position="2750"/>
    </location>
</feature>
<feature type="sequence variant" id="VAR_041670" description="In dbSNP:rs56341061." evidence="18">
    <original>K</original>
    <variation>E</variation>
    <location>
        <position position="2801"/>
    </location>
</feature>
<feature type="sequence variant" id="VAR_041671" description="In a colorectal adenocarcinoma sample; somatic mutation; dbSNP:rs1294404368." evidence="18">
    <original>T</original>
    <variation>M</variation>
    <location>
        <position position="2931"/>
    </location>
</feature>
<feature type="sequence variant" id="VAR_082985" description="In DEDDFA; uncertain significance; dbSNP:rs987263983." evidence="25">
    <original>R</original>
    <variation>Q</variation>
    <location>
        <position position="3757"/>
    </location>
</feature>
<feature type="sequence conflict" description="In Ref. 2; AAD04629." evidence="30" ref="2">
    <original>E</original>
    <variation>D</variation>
    <location>
        <position position="660"/>
    </location>
</feature>
<feature type="helix" evidence="39">
    <location>
        <begin position="20"/>
        <end position="26"/>
    </location>
</feature>
<feature type="strand" evidence="39">
    <location>
        <begin position="30"/>
        <end position="33"/>
    </location>
</feature>
<feature type="helix" evidence="39">
    <location>
        <begin position="37"/>
        <end position="50"/>
    </location>
</feature>
<feature type="helix" evidence="39">
    <location>
        <begin position="55"/>
        <end position="57"/>
    </location>
</feature>
<feature type="helix" evidence="39">
    <location>
        <begin position="59"/>
        <end position="74"/>
    </location>
</feature>
<feature type="strand" evidence="38">
    <location>
        <begin position="80"/>
        <end position="84"/>
    </location>
</feature>
<feature type="helix" evidence="39">
    <location>
        <begin position="85"/>
        <end position="99"/>
    </location>
</feature>
<feature type="helix" evidence="39">
    <location>
        <begin position="107"/>
        <end position="118"/>
    </location>
</feature>
<feature type="strand" evidence="39">
    <location>
        <begin position="122"/>
        <end position="124"/>
    </location>
</feature>
<feature type="helix" evidence="39">
    <location>
        <begin position="128"/>
        <end position="139"/>
    </location>
</feature>
<feature type="helix" evidence="39">
    <location>
        <begin position="140"/>
        <end position="142"/>
    </location>
</feature>
<feature type="helix" evidence="39">
    <location>
        <begin position="145"/>
        <end position="147"/>
    </location>
</feature>
<feature type="helix" evidence="39">
    <location>
        <begin position="148"/>
        <end position="171"/>
    </location>
</feature>
<feature type="helix" evidence="39">
    <location>
        <begin position="214"/>
        <end position="227"/>
    </location>
</feature>
<feature type="helix" evidence="39">
    <location>
        <begin position="234"/>
        <end position="243"/>
    </location>
</feature>
<feature type="helix" evidence="40">
    <location>
        <begin position="244"/>
        <end position="254"/>
    </location>
</feature>
<feature type="turn" evidence="38">
    <location>
        <begin position="255"/>
        <end position="259"/>
    </location>
</feature>
<feature type="helix" evidence="39">
    <location>
        <begin position="276"/>
        <end position="293"/>
    </location>
</feature>
<feature type="helix" evidence="39">
    <location>
        <begin position="294"/>
        <end position="298"/>
    </location>
</feature>
<feature type="helix" evidence="39">
    <location>
        <begin position="307"/>
        <end position="319"/>
    </location>
</feature>
<feature type="helix" evidence="38">
    <location>
        <begin position="320"/>
        <end position="322"/>
    </location>
</feature>
<feature type="helix" evidence="39">
    <location>
        <begin position="325"/>
        <end position="338"/>
    </location>
</feature>
<feature type="helix" evidence="40">
    <location>
        <begin position="339"/>
        <end position="341"/>
    </location>
</feature>
<feature type="helix" evidence="39">
    <location>
        <begin position="342"/>
        <end position="345"/>
    </location>
</feature>
<feature type="helix" evidence="40">
    <location>
        <begin position="347"/>
        <end position="351"/>
    </location>
</feature>
<feature type="helix" evidence="39">
    <location>
        <begin position="352"/>
        <end position="354"/>
    </location>
</feature>
<feature type="strand" evidence="39">
    <location>
        <begin position="357"/>
        <end position="359"/>
    </location>
</feature>
<feature type="strand" evidence="39">
    <location>
        <begin position="365"/>
        <end position="367"/>
    </location>
</feature>
<feature type="helix" evidence="37">
    <location>
        <begin position="371"/>
        <end position="385"/>
    </location>
</feature>
<feature type="helix" evidence="39">
    <location>
        <begin position="387"/>
        <end position="389"/>
    </location>
</feature>
<feature type="helix" evidence="37">
    <location>
        <begin position="392"/>
        <end position="406"/>
    </location>
</feature>
<feature type="strand" evidence="37">
    <location>
        <begin position="409"/>
        <end position="411"/>
    </location>
</feature>
<feature type="helix" evidence="37">
    <location>
        <begin position="413"/>
        <end position="434"/>
    </location>
</feature>
<feature type="helix" evidence="37">
    <location>
        <begin position="436"/>
        <end position="438"/>
    </location>
</feature>
<feature type="helix" evidence="37">
    <location>
        <begin position="442"/>
        <end position="469"/>
    </location>
</feature>
<feature type="helix" evidence="37">
    <location>
        <begin position="535"/>
        <end position="564"/>
    </location>
</feature>
<feature type="helix" evidence="37">
    <location>
        <begin position="583"/>
        <end position="599"/>
    </location>
</feature>
<feature type="helix" evidence="37">
    <location>
        <begin position="600"/>
        <end position="604"/>
    </location>
</feature>
<feature type="strand" evidence="37">
    <location>
        <begin position="605"/>
        <end position="607"/>
    </location>
</feature>
<feature type="strand" evidence="37">
    <location>
        <begin position="609"/>
        <end position="611"/>
    </location>
</feature>
<feature type="strand" evidence="37">
    <location>
        <begin position="613"/>
        <end position="615"/>
    </location>
</feature>
<feature type="helix" evidence="37">
    <location>
        <begin position="624"/>
        <end position="626"/>
    </location>
</feature>
<feature type="helix" evidence="37">
    <location>
        <begin position="627"/>
        <end position="639"/>
    </location>
</feature>
<feature type="helix" evidence="37">
    <location>
        <begin position="644"/>
        <end position="654"/>
    </location>
</feature>
<feature type="helix" evidence="37">
    <location>
        <begin position="657"/>
        <end position="664"/>
    </location>
</feature>
<feature type="helix" evidence="37">
    <location>
        <begin position="666"/>
        <end position="668"/>
    </location>
</feature>
<feature type="helix" evidence="37">
    <location>
        <begin position="669"/>
        <end position="677"/>
    </location>
</feature>
<feature type="turn" evidence="37">
    <location>
        <begin position="679"/>
        <end position="681"/>
    </location>
</feature>
<feature type="helix" evidence="37">
    <location>
        <begin position="682"/>
        <end position="695"/>
    </location>
</feature>
<feature type="turn" evidence="37">
    <location>
        <begin position="698"/>
        <end position="702"/>
    </location>
</feature>
<feature type="helix" evidence="37">
    <location>
        <begin position="704"/>
        <end position="723"/>
    </location>
</feature>
<feature type="helix" evidence="37">
    <location>
        <begin position="725"/>
        <end position="732"/>
    </location>
</feature>
<feature type="helix" evidence="37">
    <location>
        <begin position="733"/>
        <end position="735"/>
    </location>
</feature>
<feature type="helix" evidence="37">
    <location>
        <begin position="736"/>
        <end position="747"/>
    </location>
</feature>
<feature type="helix" evidence="37">
    <location>
        <begin position="754"/>
        <end position="768"/>
    </location>
</feature>
<feature type="helix" evidence="37">
    <location>
        <begin position="774"/>
        <end position="779"/>
    </location>
</feature>
<feature type="helix" evidence="37">
    <location>
        <begin position="780"/>
        <end position="782"/>
    </location>
</feature>
<feature type="helix" evidence="37">
    <location>
        <begin position="783"/>
        <end position="795"/>
    </location>
</feature>
<feature type="helix" evidence="37">
    <location>
        <begin position="800"/>
        <end position="811"/>
    </location>
</feature>
<feature type="turn" evidence="37">
    <location>
        <begin position="817"/>
        <end position="820"/>
    </location>
</feature>
<feature type="helix" evidence="37">
    <location>
        <begin position="821"/>
        <end position="827"/>
    </location>
</feature>
<feature type="helix" evidence="37">
    <location>
        <begin position="828"/>
        <end position="835"/>
    </location>
</feature>
<feature type="helix" evidence="37">
    <location>
        <begin position="839"/>
        <end position="855"/>
    </location>
</feature>
<feature type="helix" evidence="37">
    <location>
        <begin position="858"/>
        <end position="865"/>
    </location>
</feature>
<feature type="helix" evidence="37">
    <location>
        <begin position="866"/>
        <end position="868"/>
    </location>
</feature>
<feature type="helix" evidence="37">
    <location>
        <begin position="869"/>
        <end position="879"/>
    </location>
</feature>
<feature type="helix" evidence="37">
    <location>
        <begin position="885"/>
        <end position="898"/>
    </location>
</feature>
<feature type="helix" evidence="37">
    <location>
        <begin position="899"/>
        <end position="903"/>
    </location>
</feature>
<feature type="strand" evidence="37">
    <location>
        <begin position="923"/>
        <end position="927"/>
    </location>
</feature>
<feature type="turn" evidence="37">
    <location>
        <begin position="929"/>
        <end position="931"/>
    </location>
</feature>
<feature type="strand" evidence="37">
    <location>
        <begin position="934"/>
        <end position="938"/>
    </location>
</feature>
<feature type="helix" evidence="37">
    <location>
        <begin position="940"/>
        <end position="951"/>
    </location>
</feature>
<feature type="strand" evidence="39">
    <location>
        <begin position="952"/>
        <end position="955"/>
    </location>
</feature>
<feature type="helix" evidence="37">
    <location>
        <begin position="957"/>
        <end position="973"/>
    </location>
</feature>
<feature type="helix" evidence="37">
    <location>
        <begin position="981"/>
        <end position="988"/>
    </location>
</feature>
<feature type="helix" evidence="37">
    <location>
        <begin position="992"/>
        <end position="995"/>
    </location>
</feature>
<feature type="helix" evidence="37">
    <location>
        <begin position="1005"/>
        <end position="1007"/>
    </location>
</feature>
<feature type="helix" evidence="37">
    <location>
        <begin position="1013"/>
        <end position="1029"/>
    </location>
</feature>
<feature type="turn" evidence="37">
    <location>
        <begin position="1032"/>
        <end position="1034"/>
    </location>
</feature>
<feature type="helix" evidence="37">
    <location>
        <begin position="1035"/>
        <end position="1057"/>
    </location>
</feature>
<feature type="strand" evidence="37">
    <location>
        <begin position="1058"/>
        <end position="1061"/>
    </location>
</feature>
<feature type="helix" evidence="37">
    <location>
        <begin position="1064"/>
        <end position="1066"/>
    </location>
</feature>
<feature type="strand" evidence="38">
    <location>
        <begin position="1067"/>
        <end position="1069"/>
    </location>
</feature>
<feature type="helix" evidence="37">
    <location>
        <begin position="1074"/>
        <end position="1076"/>
    </location>
</feature>
<feature type="strand" evidence="37">
    <location>
        <begin position="1080"/>
        <end position="1082"/>
    </location>
</feature>
<feature type="strand" evidence="38">
    <location>
        <begin position="1085"/>
        <end position="1087"/>
    </location>
</feature>
<feature type="helix" evidence="37">
    <location>
        <begin position="1091"/>
        <end position="1101"/>
    </location>
</feature>
<feature type="strand" evidence="39">
    <location>
        <begin position="1102"/>
        <end position="1104"/>
    </location>
</feature>
<feature type="helix" evidence="37">
    <location>
        <begin position="1107"/>
        <end position="1126"/>
    </location>
</feature>
<feature type="helix" evidence="37">
    <location>
        <begin position="1129"/>
        <end position="1132"/>
    </location>
</feature>
<feature type="helix" evidence="37">
    <location>
        <begin position="1136"/>
        <end position="1146"/>
    </location>
</feature>
<feature type="helix" evidence="37">
    <location>
        <begin position="1147"/>
        <end position="1150"/>
    </location>
</feature>
<feature type="strand" evidence="37">
    <location>
        <begin position="1151"/>
        <end position="1153"/>
    </location>
</feature>
<feature type="helix" evidence="37">
    <location>
        <begin position="1154"/>
        <end position="1170"/>
    </location>
</feature>
<feature type="helix" evidence="37">
    <location>
        <begin position="1173"/>
        <end position="1193"/>
    </location>
</feature>
<feature type="turn" evidence="37">
    <location>
        <begin position="1194"/>
        <end position="1196"/>
    </location>
</feature>
<feature type="strand" evidence="38">
    <location>
        <begin position="1199"/>
        <end position="1201"/>
    </location>
</feature>
<feature type="helix" evidence="37">
    <location>
        <begin position="1202"/>
        <end position="1218"/>
    </location>
</feature>
<feature type="turn" evidence="37">
    <location>
        <begin position="1223"/>
        <end position="1225"/>
    </location>
</feature>
<feature type="helix" evidence="37">
    <location>
        <begin position="1228"/>
        <end position="1248"/>
    </location>
</feature>
<feature type="helix" evidence="37">
    <location>
        <begin position="1254"/>
        <end position="1271"/>
    </location>
</feature>
<feature type="helix" evidence="37">
    <location>
        <begin position="1275"/>
        <end position="1279"/>
    </location>
</feature>
<feature type="helix" evidence="37">
    <location>
        <begin position="1280"/>
        <end position="1285"/>
    </location>
</feature>
<feature type="turn" evidence="37">
    <location>
        <begin position="1287"/>
        <end position="1289"/>
    </location>
</feature>
<feature type="helix" evidence="37">
    <location>
        <begin position="1297"/>
        <end position="1299"/>
    </location>
</feature>
<feature type="helix" evidence="37">
    <location>
        <begin position="1302"/>
        <end position="1315"/>
    </location>
</feature>
<feature type="strand" evidence="37">
    <location>
        <begin position="1317"/>
        <end position="1320"/>
    </location>
</feature>
<feature type="strand" evidence="37">
    <location>
        <begin position="1327"/>
        <end position="1329"/>
    </location>
</feature>
<feature type="helix" evidence="37">
    <location>
        <begin position="1330"/>
        <end position="1344"/>
    </location>
</feature>
<feature type="helix" evidence="37">
    <location>
        <begin position="1347"/>
        <end position="1351"/>
    </location>
</feature>
<feature type="helix" evidence="39">
    <location>
        <begin position="1354"/>
        <end position="1357"/>
    </location>
</feature>
<feature type="strand" evidence="40">
    <location>
        <begin position="1360"/>
        <end position="1362"/>
    </location>
</feature>
<feature type="helix" evidence="37">
    <location>
        <begin position="1363"/>
        <end position="1375"/>
    </location>
</feature>
<feature type="helix" evidence="40">
    <location>
        <begin position="1376"/>
        <end position="1378"/>
    </location>
</feature>
<feature type="helix" evidence="37">
    <location>
        <begin position="1380"/>
        <end position="1382"/>
    </location>
</feature>
<feature type="helix" evidence="37">
    <location>
        <begin position="1383"/>
        <end position="1394"/>
    </location>
</feature>
<feature type="helix" evidence="37">
    <location>
        <begin position="1399"/>
        <end position="1413"/>
    </location>
</feature>
<feature type="strand" evidence="38">
    <location>
        <begin position="1415"/>
        <end position="1418"/>
    </location>
</feature>
<feature type="helix" evidence="37">
    <location>
        <begin position="1420"/>
        <end position="1431"/>
    </location>
</feature>
<feature type="turn" evidence="37">
    <location>
        <begin position="1432"/>
        <end position="1434"/>
    </location>
</feature>
<feature type="strand" evidence="37">
    <location>
        <begin position="1435"/>
        <end position="1437"/>
    </location>
</feature>
<feature type="helix" evidence="37">
    <location>
        <begin position="1442"/>
        <end position="1454"/>
    </location>
</feature>
<feature type="helix" evidence="39">
    <location>
        <begin position="1456"/>
        <end position="1458"/>
    </location>
</feature>
<feature type="helix" evidence="37">
    <location>
        <begin position="1461"/>
        <end position="1484"/>
    </location>
</feature>
<feature type="strand" evidence="39">
    <location>
        <begin position="1490"/>
        <end position="1492"/>
    </location>
</feature>
<feature type="helix" evidence="37">
    <location>
        <begin position="1511"/>
        <end position="1523"/>
    </location>
</feature>
<feature type="strand" evidence="40">
    <location>
        <begin position="1524"/>
        <end position="1526"/>
    </location>
</feature>
<feature type="helix" evidence="39">
    <location>
        <begin position="1529"/>
        <end position="1531"/>
    </location>
</feature>
<feature type="helix" evidence="37">
    <location>
        <begin position="1532"/>
        <end position="1546"/>
    </location>
</feature>
<feature type="strand" evidence="39">
    <location>
        <begin position="1549"/>
        <end position="1551"/>
    </location>
</feature>
<feature type="helix" evidence="37">
    <location>
        <begin position="1555"/>
        <end position="1562"/>
    </location>
</feature>
<feature type="helix" evidence="37">
    <location>
        <begin position="1566"/>
        <end position="1573"/>
    </location>
</feature>
<feature type="helix" evidence="37">
    <location>
        <begin position="1576"/>
        <end position="1579"/>
    </location>
</feature>
<feature type="helix" evidence="37">
    <location>
        <begin position="1582"/>
        <end position="1592"/>
    </location>
</feature>
<feature type="strand" evidence="37">
    <location>
        <begin position="1594"/>
        <end position="1596"/>
    </location>
</feature>
<feature type="helix" evidence="37">
    <location>
        <begin position="1598"/>
        <end position="1605"/>
    </location>
</feature>
<feature type="helix" evidence="37">
    <location>
        <begin position="1609"/>
        <end position="1612"/>
    </location>
</feature>
<feature type="turn" evidence="37">
    <location>
        <begin position="1613"/>
        <end position="1615"/>
    </location>
</feature>
<feature type="helix" evidence="37">
    <location>
        <begin position="1638"/>
        <end position="1653"/>
    </location>
</feature>
<feature type="helix" evidence="37">
    <location>
        <begin position="1657"/>
        <end position="1659"/>
    </location>
</feature>
<feature type="helix" evidence="37">
    <location>
        <begin position="1661"/>
        <end position="1672"/>
    </location>
</feature>
<feature type="helix" evidence="37">
    <location>
        <begin position="1674"/>
        <end position="1681"/>
    </location>
</feature>
<feature type="helix" evidence="37">
    <location>
        <begin position="1692"/>
        <end position="1706"/>
    </location>
</feature>
<feature type="strand" evidence="38">
    <location>
        <begin position="1707"/>
        <end position="1709"/>
    </location>
</feature>
<feature type="helix" evidence="39">
    <location>
        <begin position="1710"/>
        <end position="1715"/>
    </location>
</feature>
<feature type="helix" evidence="39">
    <location>
        <begin position="1716"/>
        <end position="1718"/>
    </location>
</feature>
<feature type="turn" evidence="39">
    <location>
        <begin position="1719"/>
        <end position="1721"/>
    </location>
</feature>
<feature type="helix" evidence="38">
    <location>
        <begin position="1723"/>
        <end position="1725"/>
    </location>
</feature>
<feature type="helix" evidence="39">
    <location>
        <begin position="1728"/>
        <end position="1738"/>
    </location>
</feature>
<feature type="helix" evidence="39">
    <location>
        <begin position="1740"/>
        <end position="1743"/>
    </location>
</feature>
<feature type="turn" evidence="39">
    <location>
        <begin position="1746"/>
        <end position="1748"/>
    </location>
</feature>
<feature type="helix" evidence="39">
    <location>
        <begin position="1749"/>
        <end position="1758"/>
    </location>
</feature>
<feature type="helix" evidence="39">
    <location>
        <begin position="1760"/>
        <end position="1766"/>
    </location>
</feature>
<feature type="helix" evidence="39">
    <location>
        <begin position="1770"/>
        <end position="1773"/>
    </location>
</feature>
<feature type="turn" evidence="39">
    <location>
        <begin position="1774"/>
        <end position="1776"/>
    </location>
</feature>
<feature type="helix" evidence="39">
    <location>
        <begin position="1777"/>
        <end position="1786"/>
    </location>
</feature>
<feature type="helix" evidence="39">
    <location>
        <begin position="1804"/>
        <end position="1813"/>
    </location>
</feature>
<feature type="helix" evidence="39">
    <location>
        <begin position="1818"/>
        <end position="1820"/>
    </location>
</feature>
<feature type="helix" evidence="39">
    <location>
        <begin position="1828"/>
        <end position="1841"/>
    </location>
</feature>
<feature type="helix" evidence="39">
    <location>
        <begin position="1846"/>
        <end position="1853"/>
    </location>
</feature>
<feature type="turn" evidence="39">
    <location>
        <begin position="1854"/>
        <end position="1859"/>
    </location>
</feature>
<feature type="helix" evidence="39">
    <location>
        <begin position="1861"/>
        <end position="1870"/>
    </location>
</feature>
<feature type="helix" evidence="39">
    <location>
        <begin position="1877"/>
        <end position="1893"/>
    </location>
</feature>
<feature type="helix" evidence="39">
    <location>
        <begin position="1900"/>
        <end position="1911"/>
    </location>
</feature>
<feature type="strand" evidence="38">
    <location>
        <begin position="1913"/>
        <end position="1915"/>
    </location>
</feature>
<feature type="helix" evidence="37">
    <location>
        <begin position="1921"/>
        <end position="1925"/>
    </location>
</feature>
<feature type="strand" evidence="37">
    <location>
        <begin position="1928"/>
        <end position="1931"/>
    </location>
</feature>
<feature type="helix" evidence="39">
    <location>
        <begin position="1936"/>
        <end position="1938"/>
    </location>
</feature>
<feature type="helix" evidence="37">
    <location>
        <begin position="1939"/>
        <end position="1943"/>
    </location>
</feature>
<feature type="helix" evidence="37">
    <location>
        <begin position="1950"/>
        <end position="1964"/>
    </location>
</feature>
<feature type="helix" evidence="38">
    <location>
        <begin position="1966"/>
        <end position="1970"/>
    </location>
</feature>
<feature type="helix" evidence="39">
    <location>
        <begin position="1972"/>
        <end position="1974"/>
    </location>
</feature>
<feature type="helix" evidence="37">
    <location>
        <begin position="1976"/>
        <end position="1985"/>
    </location>
</feature>
<feature type="helix" evidence="37">
    <location>
        <begin position="1990"/>
        <end position="2000"/>
    </location>
</feature>
<feature type="helix" evidence="37">
    <location>
        <begin position="2003"/>
        <end position="2016"/>
    </location>
</feature>
<feature type="helix" evidence="37">
    <location>
        <begin position="2021"/>
        <end position="2026"/>
    </location>
</feature>
<feature type="helix" evidence="37">
    <location>
        <begin position="2031"/>
        <end position="2042"/>
    </location>
</feature>
<feature type="helix" evidence="37">
    <location>
        <begin position="2045"/>
        <end position="2060"/>
    </location>
</feature>
<feature type="helix" evidence="37">
    <location>
        <begin position="2064"/>
        <end position="2073"/>
    </location>
</feature>
<feature type="helix" evidence="37">
    <location>
        <begin position="2077"/>
        <end position="2088"/>
    </location>
</feature>
<feature type="helix" evidence="37">
    <location>
        <begin position="2096"/>
        <end position="2099"/>
    </location>
</feature>
<feature type="helix" evidence="37">
    <location>
        <begin position="2105"/>
        <end position="2111"/>
    </location>
</feature>
<feature type="strand" evidence="39">
    <location>
        <begin position="2114"/>
        <end position="2118"/>
    </location>
</feature>
<feature type="helix" evidence="39">
    <location>
        <begin position="2120"/>
        <end position="2133"/>
    </location>
</feature>
<feature type="helix" evidence="39">
    <location>
        <begin position="2139"/>
        <end position="2141"/>
    </location>
</feature>
<feature type="helix" evidence="39">
    <location>
        <begin position="2146"/>
        <end position="2154"/>
    </location>
</feature>
<feature type="helix" evidence="39">
    <location>
        <begin position="2155"/>
        <end position="2157"/>
    </location>
</feature>
<feature type="strand" evidence="39">
    <location>
        <begin position="2158"/>
        <end position="2161"/>
    </location>
</feature>
<feature type="helix" evidence="39">
    <location>
        <begin position="2165"/>
        <end position="2182"/>
    </location>
</feature>
<feature type="helix" evidence="39">
    <location>
        <begin position="2184"/>
        <end position="2189"/>
    </location>
</feature>
<feature type="helix" evidence="39">
    <location>
        <begin position="2191"/>
        <end position="2200"/>
    </location>
</feature>
<feature type="turn" evidence="39">
    <location>
        <begin position="2201"/>
        <end position="2203"/>
    </location>
</feature>
<feature type="strand" evidence="40">
    <location>
        <begin position="2205"/>
        <end position="2207"/>
    </location>
</feature>
<feature type="helix" evidence="37">
    <location>
        <begin position="2212"/>
        <end position="2219"/>
    </location>
</feature>
<feature type="helix" evidence="37">
    <location>
        <begin position="2226"/>
        <end position="2232"/>
    </location>
</feature>
<feature type="helix" evidence="37">
    <location>
        <begin position="2233"/>
        <end position="2235"/>
    </location>
</feature>
<feature type="helix" evidence="37">
    <location>
        <begin position="2240"/>
        <end position="2251"/>
    </location>
</feature>
<feature type="helix" evidence="37">
    <location>
        <begin position="2257"/>
        <end position="2273"/>
    </location>
</feature>
<feature type="helix" evidence="37">
    <location>
        <begin position="2278"/>
        <end position="2286"/>
    </location>
</feature>
<feature type="helix" evidence="38">
    <location>
        <begin position="2287"/>
        <end position="2290"/>
    </location>
</feature>
<feature type="helix" evidence="37">
    <location>
        <begin position="2292"/>
        <end position="2294"/>
    </location>
</feature>
<feature type="turn" evidence="37">
    <location>
        <begin position="2295"/>
        <end position="2299"/>
    </location>
</feature>
<feature type="helix" evidence="37">
    <location>
        <begin position="2301"/>
        <end position="2312"/>
    </location>
</feature>
<feature type="helix" evidence="37">
    <location>
        <begin position="2320"/>
        <end position="2331"/>
    </location>
</feature>
<feature type="helix" evidence="37">
    <location>
        <begin position="2340"/>
        <end position="2357"/>
    </location>
</feature>
<feature type="helix" evidence="37">
    <location>
        <begin position="2361"/>
        <end position="2375"/>
    </location>
</feature>
<feature type="helix" evidence="37">
    <location>
        <begin position="2382"/>
        <end position="2384"/>
    </location>
</feature>
<feature type="helix" evidence="37">
    <location>
        <begin position="2389"/>
        <end position="2406"/>
    </location>
</feature>
<feature type="helix" evidence="37">
    <location>
        <begin position="2411"/>
        <end position="2426"/>
    </location>
</feature>
<feature type="turn" evidence="37">
    <location>
        <begin position="2429"/>
        <end position="2434"/>
    </location>
</feature>
<feature type="helix" evidence="37">
    <location>
        <begin position="2435"/>
        <end position="2439"/>
    </location>
</feature>
<feature type="helix" evidence="37">
    <location>
        <begin position="2440"/>
        <end position="2448"/>
    </location>
</feature>
<feature type="helix" evidence="37">
    <location>
        <begin position="2452"/>
        <end position="2464"/>
    </location>
</feature>
<feature type="helix" evidence="37">
    <location>
        <begin position="2470"/>
        <end position="2478"/>
    </location>
</feature>
<feature type="helix" evidence="37">
    <location>
        <begin position="2483"/>
        <end position="2486"/>
    </location>
</feature>
<feature type="helix" evidence="37">
    <location>
        <begin position="2492"/>
        <end position="2500"/>
    </location>
</feature>
<feature type="strand" evidence="37">
    <location>
        <begin position="2506"/>
        <end position="2508"/>
    </location>
</feature>
<feature type="turn" evidence="37">
    <location>
        <begin position="2514"/>
        <end position="2516"/>
    </location>
</feature>
<feature type="helix" evidence="37">
    <location>
        <begin position="2523"/>
        <end position="2527"/>
    </location>
</feature>
<feature type="helix" evidence="37">
    <location>
        <begin position="2530"/>
        <end position="2538"/>
    </location>
</feature>
<feature type="helix" evidence="37">
    <location>
        <begin position="2586"/>
        <end position="2602"/>
    </location>
</feature>
<feature type="helix" evidence="37">
    <location>
        <begin position="2607"/>
        <end position="2618"/>
    </location>
</feature>
<feature type="helix" evidence="37">
    <location>
        <begin position="2622"/>
        <end position="2639"/>
    </location>
</feature>
<feature type="helix" evidence="37">
    <location>
        <begin position="2642"/>
        <end position="2656"/>
    </location>
</feature>
<feature type="helix" evidence="37">
    <location>
        <begin position="2659"/>
        <end position="2666"/>
    </location>
</feature>
<feature type="helix" evidence="37">
    <location>
        <begin position="2671"/>
        <end position="2679"/>
    </location>
</feature>
<feature type="strand" evidence="39">
    <location>
        <begin position="2682"/>
        <end position="2684"/>
    </location>
</feature>
<feature type="helix" evidence="37">
    <location>
        <begin position="2690"/>
        <end position="2699"/>
    </location>
</feature>
<feature type="helix" evidence="37">
    <location>
        <begin position="2703"/>
        <end position="2714"/>
    </location>
</feature>
<feature type="strand" evidence="38">
    <location>
        <begin position="2718"/>
        <end position="2720"/>
    </location>
</feature>
<feature type="helix" evidence="37">
    <location>
        <begin position="2728"/>
        <end position="2730"/>
    </location>
</feature>
<feature type="helix" evidence="37">
    <location>
        <begin position="2742"/>
        <end position="2755"/>
    </location>
</feature>
<feature type="helix" evidence="37">
    <location>
        <begin position="2758"/>
        <end position="2768"/>
    </location>
</feature>
<feature type="helix" evidence="37">
    <location>
        <begin position="2772"/>
        <end position="2781"/>
    </location>
</feature>
<feature type="turn" evidence="37">
    <location>
        <begin position="2782"/>
        <end position="2784"/>
    </location>
</feature>
<feature type="helix" evidence="37">
    <location>
        <begin position="2786"/>
        <end position="2806"/>
    </location>
</feature>
<feature type="helix" evidence="37">
    <location>
        <begin position="2811"/>
        <end position="2813"/>
    </location>
</feature>
<feature type="helix" evidence="37">
    <location>
        <begin position="2814"/>
        <end position="2830"/>
    </location>
</feature>
<feature type="helix" evidence="37">
    <location>
        <begin position="2834"/>
        <end position="2841"/>
    </location>
</feature>
<feature type="strand" evidence="37">
    <location>
        <begin position="2844"/>
        <end position="2847"/>
    </location>
</feature>
<feature type="helix" evidence="37">
    <location>
        <begin position="2849"/>
        <end position="2856"/>
    </location>
</feature>
<feature type="helix" evidence="37">
    <location>
        <begin position="2857"/>
        <end position="2859"/>
    </location>
</feature>
<feature type="helix" evidence="37">
    <location>
        <begin position="2862"/>
        <end position="2872"/>
    </location>
</feature>
<feature type="turn" evidence="37">
    <location>
        <begin position="2873"/>
        <end position="2875"/>
    </location>
</feature>
<feature type="helix" evidence="37">
    <location>
        <begin position="2878"/>
        <end position="2880"/>
    </location>
</feature>
<feature type="helix" evidence="37">
    <location>
        <begin position="2881"/>
        <end position="2894"/>
    </location>
</feature>
<feature type="helix" evidence="37">
    <location>
        <begin position="2904"/>
        <end position="2919"/>
    </location>
</feature>
<feature type="helix" evidence="37">
    <location>
        <begin position="2928"/>
        <end position="2930"/>
    </location>
</feature>
<feature type="helix" evidence="37">
    <location>
        <begin position="2931"/>
        <end position="2952"/>
    </location>
</feature>
<feature type="helix" evidence="37">
    <location>
        <begin position="2955"/>
        <end position="2957"/>
    </location>
</feature>
<feature type="helix" evidence="37">
    <location>
        <begin position="2961"/>
        <end position="2976"/>
    </location>
</feature>
<feature type="helix" evidence="37">
    <location>
        <begin position="2985"/>
        <end position="3000"/>
    </location>
</feature>
<feature type="helix" evidence="37">
    <location>
        <begin position="3012"/>
        <end position="3020"/>
    </location>
</feature>
<feature type="helix" evidence="37">
    <location>
        <begin position="3028"/>
        <end position="3051"/>
    </location>
</feature>
<feature type="helix" evidence="37">
    <location>
        <begin position="3054"/>
        <end position="3062"/>
    </location>
</feature>
<feature type="helix" evidence="37">
    <location>
        <begin position="3063"/>
        <end position="3066"/>
    </location>
</feature>
<feature type="helix" evidence="37">
    <location>
        <begin position="3072"/>
        <end position="3089"/>
    </location>
</feature>
<feature type="turn" evidence="37">
    <location>
        <begin position="3090"/>
        <end position="3092"/>
    </location>
</feature>
<feature type="helix" evidence="37">
    <location>
        <begin position="3095"/>
        <end position="3106"/>
    </location>
</feature>
<feature type="helix" evidence="37">
    <location>
        <begin position="3115"/>
        <end position="3131"/>
    </location>
</feature>
<feature type="turn" evidence="39">
    <location>
        <begin position="3132"/>
        <end position="3134"/>
    </location>
</feature>
<feature type="helix" evidence="37">
    <location>
        <begin position="3135"/>
        <end position="3148"/>
    </location>
</feature>
<feature type="helix" evidence="37">
    <location>
        <begin position="3153"/>
        <end position="3170"/>
    </location>
</feature>
<feature type="helix" evidence="37">
    <location>
        <begin position="3173"/>
        <end position="3186"/>
    </location>
</feature>
<feature type="turn" evidence="37">
    <location>
        <begin position="3192"/>
        <end position="3195"/>
    </location>
</feature>
<feature type="helix" evidence="37">
    <location>
        <begin position="3196"/>
        <end position="3205"/>
    </location>
</feature>
<feature type="helix" evidence="37">
    <location>
        <begin position="3206"/>
        <end position="3208"/>
    </location>
</feature>
<feature type="helix" evidence="37">
    <location>
        <begin position="3214"/>
        <end position="3222"/>
    </location>
</feature>
<feature type="strand" evidence="40">
    <location>
        <begin position="3224"/>
        <end position="3226"/>
    </location>
</feature>
<feature type="helix" evidence="37">
    <location>
        <begin position="3228"/>
        <end position="3234"/>
    </location>
</feature>
<feature type="helix" evidence="37">
    <location>
        <begin position="3235"/>
        <end position="3242"/>
    </location>
</feature>
<feature type="helix" evidence="37">
    <location>
        <begin position="3247"/>
        <end position="3260"/>
    </location>
</feature>
<feature type="helix" evidence="37">
    <location>
        <begin position="3262"/>
        <end position="3283"/>
    </location>
</feature>
<feature type="turn" evidence="39">
    <location>
        <begin position="3284"/>
        <end position="3286"/>
    </location>
</feature>
<feature type="helix" evidence="37">
    <location>
        <begin position="3295"/>
        <end position="3310"/>
    </location>
</feature>
<feature type="helix" evidence="37">
    <location>
        <begin position="3312"/>
        <end position="3324"/>
    </location>
</feature>
<feature type="helix" evidence="37">
    <location>
        <begin position="3325"/>
        <end position="3328"/>
    </location>
</feature>
<feature type="helix" evidence="37">
    <location>
        <begin position="3332"/>
        <end position="3354"/>
    </location>
</feature>
<feature type="turn" evidence="37">
    <location>
        <begin position="3355"/>
        <end position="3358"/>
    </location>
</feature>
<feature type="helix" evidence="37">
    <location>
        <begin position="3365"/>
        <end position="3376"/>
    </location>
</feature>
<feature type="helix" evidence="37">
    <location>
        <begin position="3396"/>
        <end position="3407"/>
    </location>
</feature>
<feature type="helix" evidence="37">
    <location>
        <begin position="3411"/>
        <end position="3423"/>
    </location>
</feature>
<feature type="turn" evidence="37">
    <location>
        <begin position="3429"/>
        <end position="3432"/>
    </location>
</feature>
<feature type="helix" evidence="37">
    <location>
        <begin position="3434"/>
        <end position="3452"/>
    </location>
</feature>
<feature type="strand" evidence="37">
    <location>
        <begin position="3457"/>
        <end position="3460"/>
    </location>
</feature>
<feature type="helix" evidence="37">
    <location>
        <begin position="3461"/>
        <end position="3463"/>
    </location>
</feature>
<feature type="helix" evidence="37">
    <location>
        <begin position="3466"/>
        <end position="3470"/>
    </location>
</feature>
<feature type="turn" evidence="37">
    <location>
        <begin position="3473"/>
        <end position="3475"/>
    </location>
</feature>
<feature type="turn" evidence="37">
    <location>
        <begin position="3481"/>
        <end position="3484"/>
    </location>
</feature>
<feature type="strand" evidence="37">
    <location>
        <begin position="3489"/>
        <end position="3491"/>
    </location>
</feature>
<feature type="strand" evidence="37">
    <location>
        <begin position="3495"/>
        <end position="3499"/>
    </location>
</feature>
<feature type="strand" evidence="37">
    <location>
        <begin position="3501"/>
        <end position="3507"/>
    </location>
</feature>
<feature type="strand" evidence="37">
    <location>
        <begin position="3509"/>
        <end position="3520"/>
    </location>
</feature>
<feature type="strand" evidence="37">
    <location>
        <begin position="3525"/>
        <end position="3531"/>
    </location>
</feature>
<feature type="helix" evidence="37">
    <location>
        <begin position="3536"/>
        <end position="3552"/>
    </location>
</feature>
<feature type="helix" evidence="37">
    <location>
        <begin position="3553"/>
        <end position="3557"/>
    </location>
</feature>
<feature type="helix" evidence="37">
    <location>
        <begin position="3562"/>
        <end position="3565"/>
    </location>
</feature>
<feature type="strand" evidence="37">
    <location>
        <begin position="3574"/>
        <end position="3578"/>
    </location>
</feature>
<feature type="strand" evidence="37">
    <location>
        <begin position="3581"/>
        <end position="3585"/>
    </location>
</feature>
<feature type="strand" evidence="37">
    <location>
        <begin position="3588"/>
        <end position="3592"/>
    </location>
</feature>
<feature type="helix" evidence="37">
    <location>
        <begin position="3593"/>
        <end position="3604"/>
    </location>
</feature>
<feature type="helix" evidence="37">
    <location>
        <begin position="3610"/>
        <end position="3625"/>
    </location>
</feature>
<feature type="helix" evidence="37">
    <location>
        <begin position="3631"/>
        <end position="3644"/>
    </location>
</feature>
<feature type="helix" evidence="37">
    <location>
        <begin position="3650"/>
        <end position="3658"/>
    </location>
</feature>
<feature type="helix" evidence="37">
    <location>
        <begin position="3662"/>
        <end position="3685"/>
    </location>
</feature>
<feature type="helix" evidence="37">
    <location>
        <begin position="3693"/>
        <end position="3695"/>
    </location>
</feature>
<feature type="strand" evidence="37">
    <location>
        <begin position="3696"/>
        <end position="3699"/>
    </location>
</feature>
<feature type="turn" evidence="37">
    <location>
        <begin position="3700"/>
        <end position="3702"/>
    </location>
</feature>
<feature type="strand" evidence="37">
    <location>
        <begin position="3705"/>
        <end position="3708"/>
    </location>
</feature>
<feature type="turn" evidence="37">
    <location>
        <begin position="3716"/>
        <end position="3718"/>
    </location>
</feature>
<feature type="strand" evidence="37">
    <location>
        <begin position="3719"/>
        <end position="3721"/>
    </location>
</feature>
<feature type="strand" evidence="37">
    <location>
        <begin position="3726"/>
        <end position="3729"/>
    </location>
</feature>
<feature type="helix" evidence="37">
    <location>
        <begin position="3733"/>
        <end position="3739"/>
    </location>
</feature>
<feature type="helix" evidence="37">
    <location>
        <begin position="3741"/>
        <end position="3745"/>
    </location>
</feature>
<feature type="helix" evidence="37">
    <location>
        <begin position="3747"/>
        <end position="3759"/>
    </location>
</feature>
<feature type="turn" evidence="37">
    <location>
        <begin position="3762"/>
        <end position="3764"/>
    </location>
</feature>
<feature type="helix" evidence="37">
    <location>
        <begin position="3766"/>
        <end position="3789"/>
    </location>
</feature>
<feature type="helix" evidence="37">
    <location>
        <begin position="3798"/>
        <end position="3800"/>
    </location>
</feature>
<feature type="helix" evidence="37">
    <location>
        <begin position="3804"/>
        <end position="3826"/>
    </location>
</feature>
<feature type="helix" evidence="37">
    <location>
        <begin position="3829"/>
        <end position="3831"/>
    </location>
</feature>
<feature type="helix" evidence="37">
    <location>
        <begin position="3834"/>
        <end position="3842"/>
    </location>
</feature>
<feature type="helix" evidence="37">
    <location>
        <begin position="3845"/>
        <end position="3848"/>
    </location>
</feature>
<feature type="helix" evidence="37">
    <location>
        <begin position="3853"/>
        <end position="3855"/>
    </location>
</feature>
<dbReference type="EMBL" id="AF076974">
    <property type="protein sequence ID" value="AAD09420.1"/>
    <property type="molecule type" value="mRNA"/>
</dbReference>
<dbReference type="EMBL" id="AF110377">
    <property type="protein sequence ID" value="AAD04629.1"/>
    <property type="molecule type" value="mRNA"/>
</dbReference>
<dbReference type="EMBL" id="AC004893">
    <property type="protein sequence ID" value="AAC62433.1"/>
    <property type="status" value="ALT_SEQ"/>
    <property type="molecule type" value="Genomic_DNA"/>
</dbReference>
<dbReference type="EMBL" id="AC004991">
    <property type="protein sequence ID" value="AAC27675.2"/>
    <property type="molecule type" value="Genomic_DNA"/>
</dbReference>
<dbReference type="EMBL" id="CH471091">
    <property type="protein sequence ID" value="EAW76694.1"/>
    <property type="molecule type" value="Genomic_DNA"/>
</dbReference>
<dbReference type="EMBL" id="CH236956">
    <property type="protein sequence ID" value="EAL23887.1"/>
    <property type="molecule type" value="Genomic_DNA"/>
</dbReference>
<dbReference type="CCDS" id="CCDS5659.1">
    <molecule id="Q9Y4A5-2"/>
</dbReference>
<dbReference type="CCDS" id="CCDS59066.1">
    <molecule id="Q9Y4A5-1"/>
</dbReference>
<dbReference type="PIR" id="T02632">
    <property type="entry name" value="T02632"/>
</dbReference>
<dbReference type="RefSeq" id="NP_001231509.1">
    <molecule id="Q9Y4A5-1"/>
    <property type="nucleotide sequence ID" value="NM_001244580.2"/>
</dbReference>
<dbReference type="RefSeq" id="NP_003487.1">
    <molecule id="Q9Y4A5-2"/>
    <property type="nucleotide sequence ID" value="NM_003496.4"/>
</dbReference>
<dbReference type="PDB" id="7KTR">
    <property type="method" value="EM"/>
    <property type="resolution" value="2.93 A"/>
    <property type="chains" value="A=369-3859"/>
</dbReference>
<dbReference type="PDB" id="8H7G">
    <property type="method" value="EM"/>
    <property type="resolution" value="3.70 A"/>
    <property type="chains" value="C=1-3859"/>
</dbReference>
<dbReference type="PDB" id="8QRI">
    <property type="method" value="EM"/>
    <property type="resolution" value="3.50 A"/>
    <property type="chains" value="C=1-3859"/>
</dbReference>
<dbReference type="PDB" id="8XVG">
    <property type="method" value="EM"/>
    <property type="resolution" value="9.40 A"/>
    <property type="chains" value="L=1-3859"/>
</dbReference>
<dbReference type="PDB" id="8XVV">
    <property type="method" value="EM"/>
    <property type="resolution" value="3.20 A"/>
    <property type="chains" value="L=1-3859"/>
</dbReference>
<dbReference type="PDB" id="9C47">
    <property type="method" value="EM"/>
    <property type="resolution" value="3.40 A"/>
    <property type="chains" value="C=1-3859"/>
</dbReference>
<dbReference type="PDBsum" id="7KTR"/>
<dbReference type="PDBsum" id="8H7G"/>
<dbReference type="PDBsum" id="8QRI"/>
<dbReference type="PDBsum" id="8XVG"/>
<dbReference type="PDBsum" id="8XVV"/>
<dbReference type="PDBsum" id="9C47"/>
<dbReference type="EMDB" id="EMD-18612"/>
<dbReference type="EMDB" id="EMD-18613"/>
<dbReference type="EMDB" id="EMD-18618"/>
<dbReference type="EMDB" id="EMD-18619"/>
<dbReference type="EMDB" id="EMD-34520"/>
<dbReference type="EMDB" id="EMD-38703"/>
<dbReference type="EMDB" id="EMD-38720"/>
<dbReference type="EMDB" id="EMD-45176"/>
<dbReference type="SMR" id="Q9Y4A5"/>
<dbReference type="BioGRID" id="113900">
    <property type="interactions" value="787"/>
</dbReference>
<dbReference type="ComplexPortal" id="CPX-6802">
    <property type="entry name" value="SAGA complex, KAT2B variant"/>
</dbReference>
<dbReference type="ComplexPortal" id="CPX-900">
    <property type="entry name" value="SAGA complex, KAT2A variant"/>
</dbReference>
<dbReference type="ComplexPortal" id="CPX-903">
    <property type="entry name" value="TFTC histone acetylation complex"/>
</dbReference>
<dbReference type="ComplexPortal" id="CPX-978">
    <property type="entry name" value="NuA4 histone acetyltransferase complex"/>
</dbReference>
<dbReference type="ComplexPortal" id="CPX-989">
    <property type="entry name" value="PCAF histone acetylase complex"/>
</dbReference>
<dbReference type="CORUM" id="Q9Y4A5"/>
<dbReference type="DIP" id="DIP-28149N"/>
<dbReference type="FunCoup" id="Q9Y4A5">
    <property type="interactions" value="1798"/>
</dbReference>
<dbReference type="IntAct" id="Q9Y4A5">
    <property type="interactions" value="127"/>
</dbReference>
<dbReference type="MINT" id="Q9Y4A5"/>
<dbReference type="STRING" id="9606.ENSP00000352925"/>
<dbReference type="GlyGen" id="Q9Y4A5">
    <property type="glycosylation" value="9 sites, 2 N-linked glycans (2 sites), 1 O-linked glycan (5 sites)"/>
</dbReference>
<dbReference type="iPTMnet" id="Q9Y4A5"/>
<dbReference type="MetOSite" id="Q9Y4A5"/>
<dbReference type="PhosphoSitePlus" id="Q9Y4A5"/>
<dbReference type="SwissPalm" id="Q9Y4A5"/>
<dbReference type="BioMuta" id="TRRAP"/>
<dbReference type="DMDM" id="116242829"/>
<dbReference type="jPOST" id="Q9Y4A5"/>
<dbReference type="MassIVE" id="Q9Y4A5"/>
<dbReference type="PaxDb" id="9606-ENSP00000352925"/>
<dbReference type="PeptideAtlas" id="Q9Y4A5"/>
<dbReference type="ProteomicsDB" id="86142">
    <molecule id="Q9Y4A5-1"/>
</dbReference>
<dbReference type="ProteomicsDB" id="86143">
    <molecule id="Q9Y4A5-2"/>
</dbReference>
<dbReference type="Pumba" id="Q9Y4A5"/>
<dbReference type="Antibodypedia" id="16027">
    <property type="antibodies" value="190 antibodies from 23 providers"/>
</dbReference>
<dbReference type="DNASU" id="8295"/>
<dbReference type="Ensembl" id="ENST00000355540.7">
    <molecule id="Q9Y4A5-2"/>
    <property type="protein sequence ID" value="ENSP00000347733.3"/>
    <property type="gene ID" value="ENSG00000196367.15"/>
</dbReference>
<dbReference type="Ensembl" id="ENST00000359863.8">
    <molecule id="Q9Y4A5-1"/>
    <property type="protein sequence ID" value="ENSP00000352925.4"/>
    <property type="gene ID" value="ENSG00000196367.15"/>
</dbReference>
<dbReference type="GeneID" id="8295"/>
<dbReference type="KEGG" id="hsa:8295"/>
<dbReference type="UCSC" id="uc003upp.3">
    <molecule id="Q9Y4A5-1"/>
    <property type="organism name" value="human"/>
</dbReference>
<dbReference type="AGR" id="HGNC:12347"/>
<dbReference type="CTD" id="8295"/>
<dbReference type="DisGeNET" id="8295"/>
<dbReference type="GeneCards" id="TRRAP"/>
<dbReference type="HGNC" id="HGNC:12347">
    <property type="gene designation" value="TRRAP"/>
</dbReference>
<dbReference type="HPA" id="ENSG00000196367">
    <property type="expression patterns" value="Low tissue specificity"/>
</dbReference>
<dbReference type="MalaCards" id="TRRAP"/>
<dbReference type="MIM" id="603015">
    <property type="type" value="gene"/>
</dbReference>
<dbReference type="MIM" id="618454">
    <property type="type" value="phenotype"/>
</dbReference>
<dbReference type="MIM" id="618778">
    <property type="type" value="phenotype"/>
</dbReference>
<dbReference type="neXtProt" id="NX_Q9Y4A5"/>
<dbReference type="OpenTargets" id="ENSG00000196367"/>
<dbReference type="Orphanet" id="90635">
    <property type="disease" value="Rare autosomal dominant non-syndromic sensorineural deafness type DFNA"/>
</dbReference>
<dbReference type="PharmGKB" id="PA37020"/>
<dbReference type="VEuPathDB" id="HostDB:ENSG00000196367"/>
<dbReference type="eggNOG" id="KOG0889">
    <property type="taxonomic scope" value="Eukaryota"/>
</dbReference>
<dbReference type="GeneTree" id="ENSGT00390000017961"/>
<dbReference type="InParanoid" id="Q9Y4A5"/>
<dbReference type="OrthoDB" id="5570127at2759"/>
<dbReference type="PAN-GO" id="Q9Y4A5">
    <property type="GO annotations" value="5 GO annotations based on evolutionary models"/>
</dbReference>
<dbReference type="PhylomeDB" id="Q9Y4A5"/>
<dbReference type="TreeFam" id="TF106414"/>
<dbReference type="PathwayCommons" id="Q9Y4A5"/>
<dbReference type="Reactome" id="R-HSA-201722">
    <property type="pathway name" value="Formation of the beta-catenin:TCF transactivating complex"/>
</dbReference>
<dbReference type="Reactome" id="R-HSA-3214847">
    <property type="pathway name" value="HATs acetylate histones"/>
</dbReference>
<dbReference type="Reactome" id="R-HSA-5689880">
    <property type="pathway name" value="Ub-specific processing proteases"/>
</dbReference>
<dbReference type="SignaLink" id="Q9Y4A5"/>
<dbReference type="SIGNOR" id="Q9Y4A5"/>
<dbReference type="BioGRID-ORCS" id="8295">
    <property type="hits" value="773 hits in 1197 CRISPR screens"/>
</dbReference>
<dbReference type="ChiTaRS" id="TRRAP">
    <property type="organism name" value="human"/>
</dbReference>
<dbReference type="GenomeRNAi" id="8295"/>
<dbReference type="Pharos" id="Q9Y4A5">
    <property type="development level" value="Tbio"/>
</dbReference>
<dbReference type="PRO" id="PR:Q9Y4A5"/>
<dbReference type="Proteomes" id="UP000005640">
    <property type="component" value="Chromosome 7"/>
</dbReference>
<dbReference type="RNAct" id="Q9Y4A5">
    <property type="molecule type" value="protein"/>
</dbReference>
<dbReference type="Bgee" id="ENSG00000196367">
    <property type="expression patterns" value="Expressed in ventricular zone and 156 other cell types or tissues"/>
</dbReference>
<dbReference type="ExpressionAtlas" id="Q9Y4A5">
    <property type="expression patterns" value="baseline and differential"/>
</dbReference>
<dbReference type="GO" id="GO:0005794">
    <property type="term" value="C:Golgi apparatus"/>
    <property type="evidence" value="ECO:0000314"/>
    <property type="project" value="HPA"/>
</dbReference>
<dbReference type="GO" id="GO:0035267">
    <property type="term" value="C:NuA4 histone acetyltransferase complex"/>
    <property type="evidence" value="ECO:0000314"/>
    <property type="project" value="UniProtKB"/>
</dbReference>
<dbReference type="GO" id="GO:0005654">
    <property type="term" value="C:nucleoplasm"/>
    <property type="evidence" value="ECO:0000314"/>
    <property type="project" value="HPA"/>
</dbReference>
<dbReference type="GO" id="GO:0000786">
    <property type="term" value="C:nucleosome"/>
    <property type="evidence" value="ECO:0000314"/>
    <property type="project" value="ComplexPortal"/>
</dbReference>
<dbReference type="GO" id="GO:0005634">
    <property type="term" value="C:nucleus"/>
    <property type="evidence" value="ECO:0000314"/>
    <property type="project" value="UniProtKB"/>
</dbReference>
<dbReference type="GO" id="GO:0000124">
    <property type="term" value="C:SAGA complex"/>
    <property type="evidence" value="ECO:0000314"/>
    <property type="project" value="UniProtKB"/>
</dbReference>
<dbReference type="GO" id="GO:0000812">
    <property type="term" value="C:Swr1 complex"/>
    <property type="evidence" value="ECO:0000314"/>
    <property type="project" value="UniProtKB"/>
</dbReference>
<dbReference type="GO" id="GO:0033276">
    <property type="term" value="C:transcription factor TFTC complex"/>
    <property type="evidence" value="ECO:0000314"/>
    <property type="project" value="UniProtKB"/>
</dbReference>
<dbReference type="GO" id="GO:0003712">
    <property type="term" value="F:transcription coregulator activity"/>
    <property type="evidence" value="ECO:0000314"/>
    <property type="project" value="UniProtKB"/>
</dbReference>
<dbReference type="GO" id="GO:0140861">
    <property type="term" value="P:DNA repair-dependent chromatin remodeling"/>
    <property type="evidence" value="ECO:0000318"/>
    <property type="project" value="GO_Central"/>
</dbReference>
<dbReference type="GO" id="GO:0045893">
    <property type="term" value="P:positive regulation of DNA-templated transcription"/>
    <property type="evidence" value="ECO:0000303"/>
    <property type="project" value="ComplexPortal"/>
</dbReference>
<dbReference type="GO" id="GO:1905168">
    <property type="term" value="P:positive regulation of double-strand break repair via homologous recombination"/>
    <property type="evidence" value="ECO:0000314"/>
    <property type="project" value="ComplexPortal"/>
</dbReference>
<dbReference type="GO" id="GO:0042981">
    <property type="term" value="P:regulation of apoptotic process"/>
    <property type="evidence" value="ECO:0000303"/>
    <property type="project" value="ComplexPortal"/>
</dbReference>
<dbReference type="GO" id="GO:0051726">
    <property type="term" value="P:regulation of cell cycle"/>
    <property type="evidence" value="ECO:0000315"/>
    <property type="project" value="ComplexPortal"/>
</dbReference>
<dbReference type="GO" id="GO:0006282">
    <property type="term" value="P:regulation of DNA repair"/>
    <property type="evidence" value="ECO:0000303"/>
    <property type="project" value="ComplexPortal"/>
</dbReference>
<dbReference type="GO" id="GO:0006355">
    <property type="term" value="P:regulation of DNA-templated transcription"/>
    <property type="evidence" value="ECO:0000318"/>
    <property type="project" value="GO_Central"/>
</dbReference>
<dbReference type="GO" id="GO:2000779">
    <property type="term" value="P:regulation of double-strand break repair"/>
    <property type="evidence" value="ECO:0000303"/>
    <property type="project" value="ComplexPortal"/>
</dbReference>
<dbReference type="GO" id="GO:0043484">
    <property type="term" value="P:regulation of RNA splicing"/>
    <property type="evidence" value="ECO:0000303"/>
    <property type="project" value="ComplexPortal"/>
</dbReference>
<dbReference type="GO" id="GO:0006357">
    <property type="term" value="P:regulation of transcription by RNA polymerase II"/>
    <property type="evidence" value="ECO:0000314"/>
    <property type="project" value="ComplexPortal"/>
</dbReference>
<dbReference type="CDD" id="cd05163">
    <property type="entry name" value="PIKK_TRRAP"/>
    <property type="match status" value="1"/>
</dbReference>
<dbReference type="Gene3D" id="1.25.10.10">
    <property type="entry name" value="Leucine-rich Repeat Variant"/>
    <property type="match status" value="1"/>
</dbReference>
<dbReference type="InterPro" id="IPR011989">
    <property type="entry name" value="ARM-like"/>
</dbReference>
<dbReference type="InterPro" id="IPR016024">
    <property type="entry name" value="ARM-type_fold"/>
</dbReference>
<dbReference type="InterPro" id="IPR050517">
    <property type="entry name" value="DDR_Repair_Kinase"/>
</dbReference>
<dbReference type="InterPro" id="IPR003152">
    <property type="entry name" value="FATC_dom"/>
</dbReference>
<dbReference type="InterPro" id="IPR011009">
    <property type="entry name" value="Kinase-like_dom_sf"/>
</dbReference>
<dbReference type="InterPro" id="IPR000403">
    <property type="entry name" value="PI3/4_kinase_cat_dom"/>
</dbReference>
<dbReference type="InterPro" id="IPR003151">
    <property type="entry name" value="PIK-rel_kinase_FAT"/>
</dbReference>
<dbReference type="InterPro" id="IPR014009">
    <property type="entry name" value="PIK_FAT"/>
</dbReference>
<dbReference type="InterPro" id="IPR046807">
    <property type="entry name" value="Tra1_central"/>
</dbReference>
<dbReference type="InterPro" id="IPR046805">
    <property type="entry name" value="Tra1_ring"/>
</dbReference>
<dbReference type="PANTHER" id="PTHR11139">
    <property type="entry name" value="ATAXIA TELANGIECTASIA MUTATED ATM -RELATED"/>
    <property type="match status" value="1"/>
</dbReference>
<dbReference type="PANTHER" id="PTHR11139:SF1">
    <property type="entry name" value="TRANSFORMATION_TRANSCRIPTION DOMAIN-ASSOCIATED PROTEIN"/>
    <property type="match status" value="1"/>
</dbReference>
<dbReference type="Pfam" id="PF02259">
    <property type="entry name" value="FAT"/>
    <property type="match status" value="1"/>
</dbReference>
<dbReference type="Pfam" id="PF00454">
    <property type="entry name" value="PI3_PI4_kinase"/>
    <property type="match status" value="1"/>
</dbReference>
<dbReference type="Pfam" id="PF20175">
    <property type="entry name" value="Tra1_central"/>
    <property type="match status" value="1"/>
</dbReference>
<dbReference type="Pfam" id="PF20206">
    <property type="entry name" value="Tra1_ring"/>
    <property type="match status" value="1"/>
</dbReference>
<dbReference type="SMART" id="SM01343">
    <property type="entry name" value="FATC"/>
    <property type="match status" value="1"/>
</dbReference>
<dbReference type="SMART" id="SM00146">
    <property type="entry name" value="PI3Kc"/>
    <property type="match status" value="1"/>
</dbReference>
<dbReference type="SUPFAM" id="SSF48371">
    <property type="entry name" value="ARM repeat"/>
    <property type="match status" value="3"/>
</dbReference>
<dbReference type="SUPFAM" id="SSF56112">
    <property type="entry name" value="Protein kinase-like (PK-like)"/>
    <property type="match status" value="1"/>
</dbReference>
<dbReference type="PROSITE" id="PS51189">
    <property type="entry name" value="FAT"/>
    <property type="match status" value="1"/>
</dbReference>
<dbReference type="PROSITE" id="PS51190">
    <property type="entry name" value="FATC"/>
    <property type="match status" value="1"/>
</dbReference>
<dbReference type="PROSITE" id="PS50290">
    <property type="entry name" value="PI3_4_KINASE_3"/>
    <property type="match status" value="1"/>
</dbReference>
<protein>
    <recommendedName>
        <fullName>Transformation/transcription domain-associated protein</fullName>
    </recommendedName>
    <alternativeName>
        <fullName>350/400 kDa PCAF-associated factor</fullName>
        <shortName>PAF350/400</shortName>
    </alternativeName>
    <alternativeName>
        <fullName>STAF40</fullName>
    </alternativeName>
    <alternativeName>
        <fullName>Tra1 homolog</fullName>
    </alternativeName>
</protein>
<name>TRRAP_HUMAN</name>
<gene>
    <name type="primary">TRRAP</name>
    <name type="synonym">PAF400</name>
</gene>
<keyword id="KW-0002">3D-structure</keyword>
<keyword id="KW-0007">Acetylation</keyword>
<keyword id="KW-0010">Activator</keyword>
<keyword id="KW-0025">Alternative splicing</keyword>
<keyword id="KW-1268">Autism spectrum disorder</keyword>
<keyword id="KW-0156">Chromatin regulator</keyword>
<keyword id="KW-0209">Deafness</keyword>
<keyword id="KW-0903">Direct protein sequencing</keyword>
<keyword id="KW-0225">Disease variant</keyword>
<keyword id="KW-0991">Intellectual disability</keyword>
<keyword id="KW-1017">Isopeptide bond</keyword>
<keyword id="KW-1010">Non-syndromic deafness</keyword>
<keyword id="KW-0539">Nucleus</keyword>
<keyword id="KW-0597">Phosphoprotein</keyword>
<keyword id="KW-1267">Proteomics identification</keyword>
<keyword id="KW-1185">Reference proteome</keyword>
<keyword id="KW-0804">Transcription</keyword>
<keyword id="KW-0805">Transcription regulation</keyword>
<keyword id="KW-0832">Ubl conjugation</keyword>
<comment type="function">
    <text evidence="1 10 14 15 16 17 19 23 27">Adapter protein, which is found in various multiprotein chromatin complexes with histone acetyltransferase activity (HAT), which gives a specific tag for epigenetic transcription activation. Component of the NuA4 histone acetyltransferase complex which is responsible for acetylation of nucleosomal histones H4 and H2A. Plays a central role in MYC transcription activation, and also participates in cell transformation by MYC. Required for p53/TP53-, E2F1- and E2F4-mediated transcription activation. Also involved in transcription activation mediated by the adenovirus E1A, a viral oncoprotein that deregulates transcription of key genes. Probably acts by linking transcription factors such as E1A, MYC or E2F1 to HAT complexes such as STAGA thereby allowing transcription activation. Probably not required in the steps following histone acetylation in processes of transcription activation. May be required for the mitotic checkpoint and normal cell cycle progression. Component of a SWR1-like complex that specifically mediates the removal of histone H2A.Z/H2AZ1 from the nucleosome. May play a role in the formation and maintenance of the auditory system (By similarity).</text>
</comment>
<comment type="subunit">
    <text evidence="7 8 9 10 12 13 14 17 19 20 21 23 27 28">Interacts with MYC, E2F1 and E2F4 transcription factors. Interacts directly with p53/TP53. Interacts with GCN5L2. Component of various HAT complexes. Component of the PCAF complex, at least composed of TADA2L/ADA2, SUPT3H, TADA3L/ADA3, TAF5L/PAF65-beta, TAF6L/PAF65-alpha, TAF10/TAFII30, TAF12/TAFII20, TAF9/TAFII31 and TRRAP. Component of the TFTC-HAT complex, at least composed of TAF5L, TAF6L, TADA3L, SUPT3H/SPT3, TAF2/TAFII150, TAF4/TAFII135, TAF5/TAFII100, GCN5L2/GCN5, TAF10 and TRRAP. Component of the NuA4 histone acetyltransferase complex which contains the catalytic subunit KAT5/TIP60 and the subunits EP400, TRRAP/PAF400, BRD8/SMAP, EPC1, DMAP1/DNMAP1, RUVBL1/TIP49, RUVBL2, ING3, actin, ACTL6A/BAF53A, MORF4L1/MRG15, MORF4L2/MRGX, MRGBP, YEATS4/GAS41, VPS72/YL1 and MEAF6. Component of the STAGA complex, at least composed of SUPT3H, GCN5L2, SUPT7L, TAF5L, TAF6L, TADA3L, TAD1L, TAF10, TAF12, TRRAP and TAF9. The STAGA core complex is associated with a subcomplex required for histone deubiquitination composed of ATXN7L3, ENY2 and USP22. Component of the BAF53 complex, at least composed of BAF53A, RUVBL1, SMARCA4/BRG1, and TRRAP, which preferentially acetylates histone H4 (and H2A) within nucleosomes. Interacts with NPAT. Interaction with TELO2 and TTI1. Component of a SWR1-like complex.</text>
</comment>
<comment type="interaction">
    <interactant intactId="EBI-399128">
        <id>Q9Y4A5</id>
    </interactant>
    <interactant intactId="EBI-708350">
        <id>O15265</id>
        <label>ATXN7</label>
    </interactant>
    <organismsDiffer>false</organismsDiffer>
    <experiments>8</experiments>
</comment>
<comment type="interaction">
    <interactant intactId="EBI-399128">
        <id>Q9Y4A5</id>
    </interactant>
    <interactant intactId="EBI-447544">
        <id>P01106</id>
        <label>MYC</label>
    </interactant>
    <organismsDiffer>false</organismsDiffer>
    <experiments>7</experiments>
</comment>
<comment type="subcellular location">
    <subcellularLocation>
        <location evidence="12 27">Nucleus</location>
    </subcellularLocation>
</comment>
<comment type="alternative products">
    <event type="alternative splicing"/>
    <isoform>
        <id>Q9Y4A5-1</id>
        <name>1</name>
        <sequence type="displayed"/>
    </isoform>
    <isoform>
        <id>Q9Y4A5-2</id>
        <name>2</name>
        <sequence type="described" ref="VSP_009102 VSP_009103"/>
    </isoform>
</comment>
<comment type="domain">
    <text evidence="11">The PI3K/PI4K domain is required for the recruitment of HAT complexes, and the MYC-dependent transactivation. Although it is strongly related to the PI3/PI4-kinase family, it lacks the typical motifs that constitute the catalytic site of PI3/PI4-kinase proteins, and lacks such activity.</text>
</comment>
<comment type="disease">
    <text evidence="22">TRRAP mutation Phe-722 has been frequently found in cutaneous malignant melanoma, suggesting that TRRAP may play a role in the pathogenesis of melanoma.</text>
</comment>
<comment type="disease" evidence="24 25">
    <disease id="DI-05586">
        <name>Developmental delay with or without dysmorphic facies and autism</name>
        <acronym>DEDDFA</acronym>
        <description>An autosomal dominant neurodevelopmental disorder apparent from infancy or early childhood. Some patients present with intellectual disability and renal, cardiac, genitourinary systems, as well as structural brain abnormalities. In some cases, the phenotype is less severe, has no systemic involvement and is characterized by autism spectrum disorder and/or intellectual disability, sometimes associated with epilepsy. Affected individuals manifest variable dysmorphic features.</description>
        <dbReference type="MIM" id="618454"/>
    </disease>
    <text>The disease is caused by variants affecting the gene represented in this entry.</text>
</comment>
<comment type="disease" evidence="26">
    <disease id="DI-05761">
        <name>Deafness, autosomal dominant, 75</name>
        <acronym>DFNA75</acronym>
        <description>A form of non-syndromic deafness characterized by late-onset hearing loss that involves mid and high frequencies, and progresses to encompass all frequencies.</description>
        <dbReference type="MIM" id="618778"/>
    </disease>
    <text>The disease may be caused by variants affecting the gene represented in this entry.</text>
</comment>
<comment type="similarity">
    <text evidence="30">Belongs to the PI3/PI4-kinase family. TRA1 subfamily.</text>
</comment>
<comment type="sequence caution" evidence="30">
    <conflict type="erroneous gene model prediction">
        <sequence resource="EMBL-CDS" id="AAC62433"/>
    </conflict>
</comment>
<evidence type="ECO:0000250" key="1">
    <source>
        <dbReference type="UniProtKB" id="A0A0R4ITC5"/>
    </source>
</evidence>
<evidence type="ECO:0000255" key="2"/>
<evidence type="ECO:0000255" key="3">
    <source>
        <dbReference type="PROSITE-ProRule" id="PRU00269"/>
    </source>
</evidence>
<evidence type="ECO:0000255" key="4">
    <source>
        <dbReference type="PROSITE-ProRule" id="PRU00534"/>
    </source>
</evidence>
<evidence type="ECO:0000255" key="5">
    <source>
        <dbReference type="PROSITE-ProRule" id="PRU00535"/>
    </source>
</evidence>
<evidence type="ECO:0000256" key="6">
    <source>
        <dbReference type="SAM" id="MobiDB-lite"/>
    </source>
</evidence>
<evidence type="ECO:0000269" key="7">
    <source>
    </source>
</evidence>
<evidence type="ECO:0000269" key="8">
    <source>
    </source>
</evidence>
<evidence type="ECO:0000269" key="9">
    <source>
    </source>
</evidence>
<evidence type="ECO:0000269" key="10">
    <source>
    </source>
</evidence>
<evidence type="ECO:0000269" key="11">
    <source>
    </source>
</evidence>
<evidence type="ECO:0000269" key="12">
    <source>
    </source>
</evidence>
<evidence type="ECO:0000269" key="13">
    <source>
    </source>
</evidence>
<evidence type="ECO:0000269" key="14">
    <source>
    </source>
</evidence>
<evidence type="ECO:0000269" key="15">
    <source>
    </source>
</evidence>
<evidence type="ECO:0000269" key="16">
    <source>
    </source>
</evidence>
<evidence type="ECO:0000269" key="17">
    <source>
    </source>
</evidence>
<evidence type="ECO:0000269" key="18">
    <source>
    </source>
</evidence>
<evidence type="ECO:0000269" key="19">
    <source>
    </source>
</evidence>
<evidence type="ECO:0000269" key="20">
    <source>
    </source>
</evidence>
<evidence type="ECO:0000269" key="21">
    <source>
    </source>
</evidence>
<evidence type="ECO:0000269" key="22">
    <source>
    </source>
</evidence>
<evidence type="ECO:0000269" key="23">
    <source>
    </source>
</evidence>
<evidence type="ECO:0000269" key="24">
    <source>
    </source>
</evidence>
<evidence type="ECO:0000269" key="25">
    <source>
    </source>
</evidence>
<evidence type="ECO:0000269" key="26">
    <source>
    </source>
</evidence>
<evidence type="ECO:0000269" key="27">
    <source>
    </source>
</evidence>
<evidence type="ECO:0000269" key="28">
    <source>
    </source>
</evidence>
<evidence type="ECO:0000303" key="29">
    <source>
    </source>
</evidence>
<evidence type="ECO:0000305" key="30"/>
<evidence type="ECO:0007744" key="31">
    <source>
    </source>
</evidence>
<evidence type="ECO:0007744" key="32">
    <source>
    </source>
</evidence>
<evidence type="ECO:0007744" key="33">
    <source>
    </source>
</evidence>
<evidence type="ECO:0007744" key="34">
    <source>
    </source>
</evidence>
<evidence type="ECO:0007744" key="35">
    <source>
    </source>
</evidence>
<evidence type="ECO:0007744" key="36">
    <source>
    </source>
</evidence>
<evidence type="ECO:0007829" key="37">
    <source>
        <dbReference type="PDB" id="7KTR"/>
    </source>
</evidence>
<evidence type="ECO:0007829" key="38">
    <source>
        <dbReference type="PDB" id="8QRI"/>
    </source>
</evidence>
<evidence type="ECO:0007829" key="39">
    <source>
        <dbReference type="PDB" id="8XVV"/>
    </source>
</evidence>
<evidence type="ECO:0007829" key="40">
    <source>
        <dbReference type="PDB" id="9C47"/>
    </source>
</evidence>